<evidence type="ECO:0000250" key="1"/>
<evidence type="ECO:0000250" key="2">
    <source>
        <dbReference type="UniProtKB" id="P35235"/>
    </source>
</evidence>
<evidence type="ECO:0000250" key="3">
    <source>
        <dbReference type="UniProtKB" id="P41499"/>
    </source>
</evidence>
<evidence type="ECO:0000255" key="4">
    <source>
        <dbReference type="PROSITE-ProRule" id="PRU00160"/>
    </source>
</evidence>
<evidence type="ECO:0000255" key="5">
    <source>
        <dbReference type="PROSITE-ProRule" id="PRU00191"/>
    </source>
</evidence>
<evidence type="ECO:0000255" key="6">
    <source>
        <dbReference type="PROSITE-ProRule" id="PRU10044"/>
    </source>
</evidence>
<evidence type="ECO:0000256" key="7">
    <source>
        <dbReference type="SAM" id="MobiDB-lite"/>
    </source>
</evidence>
<evidence type="ECO:0000269" key="8">
    <source>
    </source>
</evidence>
<evidence type="ECO:0000269" key="9">
    <source>
    </source>
</evidence>
<evidence type="ECO:0000269" key="10">
    <source>
    </source>
</evidence>
<evidence type="ECO:0000269" key="11">
    <source>
    </source>
</evidence>
<evidence type="ECO:0000269" key="12">
    <source>
    </source>
</evidence>
<evidence type="ECO:0000269" key="13">
    <source>
    </source>
</evidence>
<evidence type="ECO:0000269" key="14">
    <source>
    </source>
</evidence>
<evidence type="ECO:0000269" key="15">
    <source>
    </source>
</evidence>
<evidence type="ECO:0000269" key="16">
    <source>
    </source>
</evidence>
<evidence type="ECO:0000269" key="17">
    <source>
    </source>
</evidence>
<evidence type="ECO:0000269" key="18">
    <source>
    </source>
</evidence>
<evidence type="ECO:0000269" key="19">
    <source>
    </source>
</evidence>
<evidence type="ECO:0000269" key="20">
    <source>
    </source>
</evidence>
<evidence type="ECO:0000269" key="21">
    <source>
    </source>
</evidence>
<evidence type="ECO:0000269" key="22">
    <source>
    </source>
</evidence>
<evidence type="ECO:0000269" key="23">
    <source>
    </source>
</evidence>
<evidence type="ECO:0000269" key="24">
    <source>
    </source>
</evidence>
<evidence type="ECO:0000269" key="25">
    <source>
    </source>
</evidence>
<evidence type="ECO:0000269" key="26">
    <source>
    </source>
</evidence>
<evidence type="ECO:0000269" key="27">
    <source>
    </source>
</evidence>
<evidence type="ECO:0000269" key="28">
    <source>
    </source>
</evidence>
<evidence type="ECO:0000269" key="29">
    <source>
    </source>
</evidence>
<evidence type="ECO:0000269" key="30">
    <source>
    </source>
</evidence>
<evidence type="ECO:0000269" key="31">
    <source>
    </source>
</evidence>
<evidence type="ECO:0000269" key="32">
    <source>
    </source>
</evidence>
<evidence type="ECO:0000269" key="33">
    <source>
    </source>
</evidence>
<evidence type="ECO:0000269" key="34">
    <source>
    </source>
</evidence>
<evidence type="ECO:0000269" key="35">
    <source>
    </source>
</evidence>
<evidence type="ECO:0000269" key="36">
    <source>
    </source>
</evidence>
<evidence type="ECO:0000269" key="37">
    <source>
    </source>
</evidence>
<evidence type="ECO:0000269" key="38">
    <source>
    </source>
</evidence>
<evidence type="ECO:0000269" key="39">
    <source>
    </source>
</evidence>
<evidence type="ECO:0000269" key="40">
    <source>
    </source>
</evidence>
<evidence type="ECO:0000269" key="41">
    <source>
    </source>
</evidence>
<evidence type="ECO:0000269" key="42">
    <source>
    </source>
</evidence>
<evidence type="ECO:0000269" key="43">
    <source>
    </source>
</evidence>
<evidence type="ECO:0000269" key="44">
    <source>
    </source>
</evidence>
<evidence type="ECO:0000269" key="45">
    <source>
    </source>
</evidence>
<evidence type="ECO:0000269" key="46">
    <source>
    </source>
</evidence>
<evidence type="ECO:0000269" key="47">
    <source>
    </source>
</evidence>
<evidence type="ECO:0000269" key="48">
    <source>
    </source>
</evidence>
<evidence type="ECO:0000269" key="49">
    <source>
    </source>
</evidence>
<evidence type="ECO:0000269" key="50">
    <source>
    </source>
</evidence>
<evidence type="ECO:0000269" key="51">
    <source>
    </source>
</evidence>
<evidence type="ECO:0000269" key="52">
    <source>
    </source>
</evidence>
<evidence type="ECO:0000269" key="53">
    <source>
    </source>
</evidence>
<evidence type="ECO:0000269" key="54">
    <source>
    </source>
</evidence>
<evidence type="ECO:0000269" key="55">
    <source>
    </source>
</evidence>
<evidence type="ECO:0000269" key="56">
    <source>
    </source>
</evidence>
<evidence type="ECO:0000269" key="57">
    <source>
    </source>
</evidence>
<evidence type="ECO:0000269" key="58">
    <source>
    </source>
</evidence>
<evidence type="ECO:0000269" key="59">
    <source>
    </source>
</evidence>
<evidence type="ECO:0000269" key="60">
    <source>
    </source>
</evidence>
<evidence type="ECO:0000269" key="61">
    <source>
    </source>
</evidence>
<evidence type="ECO:0000269" key="62">
    <source>
    </source>
</evidence>
<evidence type="ECO:0000269" key="63">
    <source>
    </source>
</evidence>
<evidence type="ECO:0000269" key="64">
    <source>
    </source>
</evidence>
<evidence type="ECO:0000269" key="65">
    <source>
    </source>
</evidence>
<evidence type="ECO:0000269" key="66">
    <source>
    </source>
</evidence>
<evidence type="ECO:0000269" key="67">
    <source>
    </source>
</evidence>
<evidence type="ECO:0000269" key="68">
    <source>
    </source>
</evidence>
<evidence type="ECO:0000305" key="69"/>
<evidence type="ECO:0007744" key="70">
    <source>
    </source>
</evidence>
<evidence type="ECO:0007744" key="71">
    <source>
    </source>
</evidence>
<evidence type="ECO:0007744" key="72">
    <source>
    </source>
</evidence>
<evidence type="ECO:0007829" key="73">
    <source>
        <dbReference type="PDB" id="3B7O"/>
    </source>
</evidence>
<evidence type="ECO:0007829" key="74">
    <source>
        <dbReference type="PDB" id="3TKZ"/>
    </source>
</evidence>
<evidence type="ECO:0007829" key="75">
    <source>
        <dbReference type="PDB" id="3ZM0"/>
    </source>
</evidence>
<evidence type="ECO:0007829" key="76">
    <source>
        <dbReference type="PDB" id="3ZM1"/>
    </source>
</evidence>
<evidence type="ECO:0007829" key="77">
    <source>
        <dbReference type="PDB" id="4DGX"/>
    </source>
</evidence>
<evidence type="ECO:0007829" key="78">
    <source>
        <dbReference type="PDB" id="4JEG"/>
    </source>
</evidence>
<evidence type="ECO:0007829" key="79">
    <source>
        <dbReference type="PDB" id="4JMG"/>
    </source>
</evidence>
<evidence type="ECO:0007829" key="80">
    <source>
        <dbReference type="PDB" id="4OHD"/>
    </source>
</evidence>
<evidence type="ECO:0007829" key="81">
    <source>
        <dbReference type="PDB" id="4PVG"/>
    </source>
</evidence>
<evidence type="ECO:0007829" key="82">
    <source>
        <dbReference type="PDB" id="4RDD"/>
    </source>
</evidence>
<evidence type="ECO:0007829" key="83">
    <source>
        <dbReference type="PDB" id="5BK8"/>
    </source>
</evidence>
<evidence type="ECO:0007829" key="84">
    <source>
        <dbReference type="PDB" id="5DF6"/>
    </source>
</evidence>
<evidence type="ECO:0007829" key="85">
    <source>
        <dbReference type="PDB" id="5EHP"/>
    </source>
</evidence>
<evidence type="ECO:0007829" key="86">
    <source>
        <dbReference type="PDB" id="5EHR"/>
    </source>
</evidence>
<evidence type="ECO:0007829" key="87">
    <source>
        <dbReference type="PDB" id="5I6V"/>
    </source>
</evidence>
<evidence type="ECO:0007829" key="88">
    <source>
        <dbReference type="PDB" id="5X7B"/>
    </source>
</evidence>
<evidence type="ECO:0007829" key="89">
    <source>
        <dbReference type="PDB" id="6CMP"/>
    </source>
</evidence>
<evidence type="ECO:0007829" key="90">
    <source>
        <dbReference type="PDB" id="6CMQ"/>
    </source>
</evidence>
<evidence type="ECO:0007829" key="91">
    <source>
        <dbReference type="PDB" id="7R7D"/>
    </source>
</evidence>
<evidence type="ECO:0007829" key="92">
    <source>
        <dbReference type="PDB" id="7R7I"/>
    </source>
</evidence>
<evidence type="ECO:0007829" key="93">
    <source>
        <dbReference type="PDB" id="7RCT"/>
    </source>
</evidence>
<evidence type="ECO:0007829" key="94">
    <source>
        <dbReference type="PDB" id="8WFY"/>
    </source>
</evidence>
<name>PTN11_HUMAN</name>
<feature type="initiator methionine" description="Removed" evidence="70">
    <location>
        <position position="1"/>
    </location>
</feature>
<feature type="chain" id="PRO_0000094767" description="Tyrosine-protein phosphatase non-receptor type 11">
    <location>
        <begin position="2"/>
        <end position="593"/>
    </location>
</feature>
<feature type="domain" description="SH2 1" evidence="5">
    <location>
        <begin position="6"/>
        <end position="102"/>
    </location>
</feature>
<feature type="domain" description="SH2 2" evidence="5">
    <location>
        <begin position="112"/>
        <end position="216"/>
    </location>
</feature>
<feature type="domain" description="Tyrosine-protein phosphatase" evidence="4">
    <location>
        <begin position="247"/>
        <end position="517"/>
    </location>
</feature>
<feature type="region of interest" description="Disordered" evidence="7">
    <location>
        <begin position="548"/>
        <end position="571"/>
    </location>
</feature>
<feature type="compositionally biased region" description="Pro residues" evidence="7">
    <location>
        <begin position="559"/>
        <end position="568"/>
    </location>
</feature>
<feature type="active site" description="Phosphocysteine intermediate">
    <location>
        <position position="459"/>
    </location>
</feature>
<feature type="binding site" evidence="1">
    <location>
        <position position="425"/>
    </location>
    <ligand>
        <name>substrate</name>
    </ligand>
</feature>
<feature type="binding site" evidence="1">
    <location>
        <begin position="459"/>
        <end position="465"/>
    </location>
    <ligand>
        <name>substrate</name>
    </ligand>
</feature>
<feature type="binding site" evidence="1">
    <location>
        <position position="506"/>
    </location>
    <ligand>
        <name>substrate</name>
    </ligand>
</feature>
<feature type="modified residue" description="N-acetylthreonine" evidence="70">
    <location>
        <position position="2"/>
    </location>
</feature>
<feature type="modified residue" description="Phosphotyrosine" evidence="71">
    <location>
        <position position="62"/>
    </location>
</feature>
<feature type="modified residue" description="Phosphotyrosine" evidence="2">
    <location>
        <position position="66"/>
    </location>
</feature>
<feature type="modified residue" description="Phosphotyrosine; by PDGFR" evidence="60">
    <location>
        <position position="542"/>
    </location>
</feature>
<feature type="modified residue" description="Phosphotyrosine; by PDGFR" evidence="71 72">
    <location>
        <position position="580"/>
    </location>
</feature>
<feature type="splice variant" id="VSP_060437" description="In isoform 2.">
    <original>G</original>
    <variation>GQALL</variation>
    <location>
        <position position="407"/>
    </location>
</feature>
<feature type="splice variant" id="VSP_060438" description="In isoform 3.">
    <original>S</original>
    <variation>R</variation>
    <location>
        <position position="460"/>
    </location>
</feature>
<feature type="splice variant" id="VSP_060439" description="In isoform 3.">
    <location>
        <begin position="461"/>
        <end position="593"/>
    </location>
</feature>
<feature type="sequence variant" id="VAR_027183" description="In NS1; dbSNP:rs267606990." evidence="26">
    <original>T</original>
    <variation>I</variation>
    <location>
        <position position="2"/>
    </location>
</feature>
<feature type="sequence variant" id="VAR_015601" description="In NS1; dbSNP:rs397507501." evidence="17 26">
    <original>T</original>
    <variation>A</variation>
    <location>
        <position position="42"/>
    </location>
</feature>
<feature type="sequence variant" id="VAR_027184" description="In NS1; dbSNP:rs397507506." evidence="22">
    <original>N</original>
    <variation>K</variation>
    <location>
        <position position="58"/>
    </location>
</feature>
<feature type="sequence variant" id="VAR_066060" description="In NS1; dbSNP:rs886043790." evidence="48">
    <original>T</original>
    <variation>A</variation>
    <location>
        <position position="59"/>
    </location>
</feature>
<feature type="sequence variant" id="VAR_015602" description="In NS1; dbSNP:rs397507509." evidence="17">
    <original>G</original>
    <variation>A</variation>
    <location>
        <position position="60"/>
    </location>
</feature>
<feature type="sequence variant" id="VAR_015990" description="In myelodysplastic syndrome; dbSNP:rs397507509." evidence="23">
    <original>G</original>
    <variation>V</variation>
    <location>
        <position position="60"/>
    </location>
</feature>
<feature type="sequence variant" id="VAR_015603" description="In NS1; dbSNP:rs121918461." evidence="16 17 19 22">
    <original>D</original>
    <variation>G</variation>
    <location>
        <position position="61"/>
    </location>
</feature>
<feature type="sequence variant" id="VAR_015604" description="In NS1; dbSNP:rs397507510." evidence="17 22">
    <original>D</original>
    <variation>N</variation>
    <location>
        <position position="61"/>
    </location>
</feature>
<feature type="sequence variant" id="VAR_015991" description="In JMML; also in myelodysplastic syndrome; dbSNP:rs121918461." evidence="23">
    <original>D</original>
    <variation>V</variation>
    <location>
        <position position="61"/>
    </location>
</feature>
<feature type="sequence variant" id="VAR_015992" description="In JMML; dbSNP:rs397507510." evidence="23">
    <original>D</original>
    <variation>Y</variation>
    <location>
        <position position="61"/>
    </location>
</feature>
<feature type="sequence variant" id="VAR_015605" description="In NS1; also in Noonan patients manifesting juvenile myelomonocytic leukemia; dbSNP:rs121918460." evidence="17 20 23 26">
    <original>Y</original>
    <variation>D</variation>
    <location>
        <position position="62"/>
    </location>
</feature>
<feature type="sequence variant" id="VAR_015606" description="In NS1; dbSNP:rs121918459." evidence="16 17 19 20 22 26">
    <original>Y</original>
    <variation>C</variation>
    <location>
        <position position="63"/>
    </location>
</feature>
<feature type="sequence variant" id="VAR_015993" description="In JMML; also in myelodysplastic syndrome; dbSNP:rs397507511." evidence="23">
    <original>E</original>
    <variation>K</variation>
    <location>
        <position position="69"/>
    </location>
</feature>
<feature type="sequence variant" id="VAR_027185" description="In NS1; dbSNP:rs397507511." evidence="22">
    <original>E</original>
    <variation>Q</variation>
    <location>
        <position position="69"/>
    </location>
</feature>
<feature type="sequence variant" id="VAR_015994" description="In acute myeloid leukemia; requires 2 nucleotide substitutions." evidence="23">
    <original>F</original>
    <variation>K</variation>
    <location>
        <position position="71"/>
    </location>
</feature>
<feature type="sequence variant" id="VAR_015995" description="In NS1; also found in myelodysplastic syndrome; dbSNP:rs397507512." evidence="22 23">
    <original>F</original>
    <variation>L</variation>
    <location>
        <position position="71"/>
    </location>
</feature>
<feature type="sequence variant" id="VAR_015607" description="In NS1; dbSNP:rs121918454." evidence="16 17 26">
    <original>A</original>
    <variation>G</variation>
    <location>
        <position position="72"/>
    </location>
</feature>
<feature type="sequence variant" id="VAR_015608" description="In NS1; dbSNP:rs121918453." evidence="16 19 22">
    <original>A</original>
    <variation>S</variation>
    <location>
        <position position="72"/>
    </location>
</feature>
<feature type="sequence variant" id="VAR_015996" description="In JMML; dbSNP:rs121918453." evidence="23">
    <original>A</original>
    <variation>T</variation>
    <location>
        <position position="72"/>
    </location>
</feature>
<feature type="sequence variant" id="VAR_015997" description="In JMML; dbSNP:rs121918454." evidence="23">
    <original>A</original>
    <variation>V</variation>
    <location>
        <position position="72"/>
    </location>
</feature>
<feature type="sequence variant" id="VAR_015609" description="In NS1; also in Noonan patients manifesting juvenile myelomonocytic leukemia; dbSNP:rs121918462." evidence="17 19 22 23">
    <original>T</original>
    <variation>I</variation>
    <location>
        <position position="73"/>
    </location>
</feature>
<feature type="sequence variant" id="VAR_015998" description="In JMML; also in myelodysplastic syndrome; dbSNP:rs121918465." evidence="23">
    <original>E</original>
    <variation>A</variation>
    <location>
        <position position="76"/>
    </location>
</feature>
<feature type="sequence variant" id="VAR_015610" description="In NS1; dbSNP:rs397507514." evidence="16 17 22">
    <original>E</original>
    <variation>D</variation>
    <location>
        <position position="76"/>
    </location>
</feature>
<feature type="sequence variant" id="VAR_015999" description="In JMML; dbSNP:rs121918465." evidence="23">
    <original>E</original>
    <variation>G</variation>
    <location>
        <position position="76"/>
    </location>
</feature>
<feature type="sequence variant" id="VAR_016000" description="In JMML; increases protein tyrosine phosphatase activity against CDC73; dbSNP:rs121918464." evidence="23 58">
    <original>E</original>
    <variation>K</variation>
    <location>
        <position position="76"/>
    </location>
</feature>
<feature type="sequence variant" id="VAR_016001" description="In JMML; dbSNP:rs121918465." evidence="23">
    <original>E</original>
    <variation>V</variation>
    <location>
        <position position="76"/>
    </location>
</feature>
<feature type="sequence variant" id="VAR_027186" description="In NS1." evidence="26">
    <original>Q</original>
    <variation>P</variation>
    <location>
        <position position="79"/>
    </location>
</feature>
<feature type="sequence variant" id="VAR_015611" description="In NS1; dbSNP:rs121918466." evidence="16 17 21 22">
    <original>Q</original>
    <variation>R</variation>
    <location>
        <position position="79"/>
    </location>
</feature>
<feature type="sequence variant" id="VAR_015612" description="In NS1; dbSNP:rs397507517." evidence="17 26">
    <original>D</original>
    <variation>A</variation>
    <location>
        <position position="106"/>
    </location>
</feature>
<feature type="sequence variant" id="VAR_015613" description="In NS1; dbSNP:rs397507520." evidence="17 22">
    <original>E</original>
    <variation>D</variation>
    <location>
        <position position="139"/>
    </location>
</feature>
<feature type="sequence variant" id="VAR_027187" description="In NS1; dbSNP:rs397507523." evidence="22">
    <original>Q</original>
    <variation>R</variation>
    <location>
        <position position="256"/>
    </location>
</feature>
<feature type="sequence variant" id="VAR_078101" description="In NS1; increases MAPK signaling; increases protein tyrosine phosphatase activity; changed substrate selectivity for GAB1; dbSNP:rs397507525." evidence="59">
    <original>L</original>
    <variation>F</variation>
    <location>
        <position position="261"/>
    </location>
</feature>
<feature type="sequence variant" id="VAR_078102" description="In NS1; increases MAPK signaling; increased protein tyrosine phosphatase activity; dbSNP:rs765642157." evidence="59">
    <original>L</original>
    <variation>H</variation>
    <location>
        <position position="261"/>
    </location>
</feature>
<feature type="sequence variant" id="VAR_078103" description="In NS1; increases MAPK signaling; increased protein tyrosine phosphatase activity; dbSNP:rs2038442836." evidence="59">
    <original>L</original>
    <variation>F</variation>
    <location>
        <position position="262"/>
    </location>
</feature>
<feature type="sequence variant" id="VAR_078104" description="In NS1; increases MAPK signaling; increased protein tyrosine phosphatase activity; dbSNP:rs397507526." evidence="59">
    <original>L</original>
    <variation>R</variation>
    <location>
        <position position="262"/>
    </location>
</feature>
<feature type="sequence variant" id="VAR_078105" description="In NS1; increases MAPK signaling; increased protein tyrosine phosphatase activity; dbSNP:rs376607329." evidence="59">
    <original>R</original>
    <variation>Q</variation>
    <location>
        <position position="265"/>
    </location>
</feature>
<feature type="sequence variant" id="VAR_015614" description="In NS1 and LPRD1; does not affect subcellular location; decreases protein tyrosine phosphatase activity against CDC73; dbSNP:rs121918456." evidence="17 18 26 32 35 39 58">
    <original>Y</original>
    <variation>C</variation>
    <location>
        <position position="279"/>
    </location>
</feature>
<feature type="sequence variant" id="VAR_027188" description="In LPRD1; dbSNP:rs121918456." evidence="32 35">
    <original>Y</original>
    <variation>S</variation>
    <location>
        <position position="279"/>
    </location>
</feature>
<feature type="sequence variant" id="VAR_015615" description="In NS1; dbSNP:rs397507529." evidence="16 17 22">
    <original>I</original>
    <variation>V</variation>
    <location>
        <position position="282"/>
    </location>
</feature>
<feature type="sequence variant" id="VAR_015617" description="In NS1; dbSNP:rs397507531." evidence="17">
    <original>F</original>
    <variation>L</variation>
    <location>
        <position position="285"/>
    </location>
</feature>
<feature type="sequence variant" id="VAR_015616" description="In NS1; dbSNP:rs121918463." evidence="17 19">
    <original>F</original>
    <variation>S</variation>
    <location>
        <position position="285"/>
    </location>
</feature>
<feature type="sequence variant" id="VAR_015619" description="In NS1; common mutation; dbSNP:rs28933386." evidence="16 17 19 22 26">
    <original>N</original>
    <variation>D</variation>
    <location>
        <position position="308"/>
    </location>
</feature>
<feature type="sequence variant" id="VAR_015618" description="In NS1; some patients also manifest giant cell lesions of bone and soft tissue; dbSNP:rs121918455." evidence="17 26">
    <original>N</original>
    <variation>S</variation>
    <location>
        <position position="308"/>
    </location>
</feature>
<feature type="sequence variant" id="VAR_015620" description="In NS1; benign; dbSNP:rs201787206." evidence="17">
    <original>I</original>
    <variation>V</variation>
    <location>
        <position position="309"/>
    </location>
</feature>
<feature type="sequence variant" id="VAR_027189" description="In NS1; uncertain significance; dbSNP:rs121918467." evidence="33">
    <original>T</original>
    <variation>M</variation>
    <location>
        <position position="411"/>
    </location>
</feature>
<feature type="sequence variant" id="VAR_027190" description="In LPRD1; dbSNP:rs121918468." evidence="34">
    <original>A</original>
    <variation>T</variation>
    <location>
        <position position="461"/>
    </location>
</feature>
<feature type="sequence variant" id="VAR_027191" description="In LPRD1; dbSNP:rs121918469." evidence="32 34">
    <original>G</original>
    <variation>A</variation>
    <location>
        <position position="464"/>
    </location>
</feature>
<feature type="sequence variant" id="VAR_015621" description="In LPRD1; does not affect subcellular location; decreases protein tyrosine phosphatase activity against CDC73; dbSNP:rs121918457." evidence="18 26 32 35 58">
    <original>T</original>
    <variation>M</variation>
    <location>
        <position position="468"/>
    </location>
</feature>
<feature type="sequence variant" id="VAR_071706" description="In NS1; increased phosphatase activity; dbSNP:rs397507539." evidence="57">
    <original>P</original>
    <variation>S</variation>
    <location>
        <position position="491"/>
    </location>
</feature>
<feature type="sequence variant" id="VAR_027192" description="In LPRD1; dbSNP:rs397507542." evidence="32">
    <original>R</original>
    <variation>L</variation>
    <location>
        <position position="498"/>
    </location>
</feature>
<feature type="sequence variant" id="VAR_027193" description="In LPRD1; reduced phosphatase activity; dbSNP:rs397507541." evidence="32 57">
    <original>R</original>
    <variation>W</variation>
    <location>
        <position position="498"/>
    </location>
</feature>
<feature type="sequence variant" id="VAR_015622" description="In NS1; dbSNP:rs397507543." evidence="17">
    <original>R</original>
    <variation>K</variation>
    <location>
        <position position="501"/>
    </location>
</feature>
<feature type="sequence variant" id="VAR_015623" description="In NS1; dbSNP:rs121918458." evidence="20 24">
    <original>S</original>
    <variation>T</variation>
    <location>
        <position position="502"/>
    </location>
</feature>
<feature type="sequence variant" id="VAR_016002" description="In JMML; dbSNP:rs397507546." evidence="23">
    <original>G</original>
    <variation>A</variation>
    <location>
        <position position="503"/>
    </location>
</feature>
<feature type="sequence variant" id="VAR_016003" description="In NS1 and JMML; JMML patient also shows growth retardation and pulmonic stenosis; dbSNP:rs397507545." evidence="23 26">
    <original>G</original>
    <variation>R</variation>
    <location>
        <position position="503"/>
    </location>
</feature>
<feature type="sequence variant" id="VAR_015624" description="In NS1; dbSNP:rs397507547." evidence="16 17 26">
    <original>M</original>
    <variation>V</variation>
    <location>
        <position position="504"/>
    </location>
</feature>
<feature type="sequence variant" id="VAR_027194" description="In LPRD1; does not affect subcellular location; decreases protein tyrosine phosphatase activity against CDC73; dbSNP:rs397507548." evidence="30 32 36 58">
    <original>Q</original>
    <variation>P</variation>
    <location>
        <position position="506"/>
    </location>
</feature>
<feature type="sequence variant" id="VAR_027195" description="In NS1." evidence="38">
    <original>Q</original>
    <variation>R</variation>
    <location>
        <position position="506"/>
    </location>
</feature>
<feature type="sequence variant" id="VAR_076499" description="In NS1 and LPRD1; does not affect subcellular location; decreases protein tyrosine phosphatase activity against CDC73; dbSNP:rs397507549." evidence="37 40 58">
    <original>Q</original>
    <variation>E</variation>
    <location>
        <position position="510"/>
    </location>
</feature>
<feature type="sequence variant" id="VAR_027196" description="In LPRD1; dbSNP:rs121918470." evidence="35">
    <original>Q</original>
    <variation>P</variation>
    <location>
        <position position="510"/>
    </location>
</feature>
<feature type="sequence variant" id="VAR_027197" description="In NS1; likely benign; dbSNP:rs397516797." evidence="26">
    <original>L</original>
    <variation>F</variation>
    <location>
        <position position="560"/>
    </location>
</feature>
<feature type="mutagenesis site" description="Abolishes phosphatase activity. Enhances interaction with NEDD9." evidence="49 65">
    <original>C</original>
    <variation>S</variation>
    <location>
        <position position="459"/>
    </location>
</feature>
<feature type="sequence conflict" description="In Ref. 3; BAA02740." evidence="69" ref="3">
    <original>S</original>
    <variation>R</variation>
    <location>
        <position position="535"/>
    </location>
</feature>
<feature type="sequence conflict" description="In Ref. 3; BAA02740." evidence="69" ref="3">
    <original>S</original>
    <variation>P</variation>
    <location>
        <position position="548"/>
    </location>
</feature>
<feature type="turn" evidence="88">
    <location>
        <begin position="4"/>
        <end position="6"/>
    </location>
</feature>
<feature type="helix" evidence="86">
    <location>
        <begin position="13"/>
        <end position="23"/>
    </location>
</feature>
<feature type="strand" evidence="86">
    <location>
        <begin position="28"/>
        <end position="33"/>
    </location>
</feature>
<feature type="strand" evidence="86">
    <location>
        <begin position="35"/>
        <end position="37"/>
    </location>
</feature>
<feature type="strand" evidence="86">
    <location>
        <begin position="41"/>
        <end position="47"/>
    </location>
</feature>
<feature type="strand" evidence="86">
    <location>
        <begin position="50"/>
        <end position="57"/>
    </location>
</feature>
<feature type="strand" evidence="86">
    <location>
        <begin position="59"/>
        <end position="61"/>
    </location>
</feature>
<feature type="strand" evidence="86">
    <location>
        <begin position="63"/>
        <end position="65"/>
    </location>
</feature>
<feature type="strand" evidence="86">
    <location>
        <begin position="70"/>
        <end position="73"/>
    </location>
</feature>
<feature type="helix" evidence="86">
    <location>
        <begin position="74"/>
        <end position="82"/>
    </location>
</feature>
<feature type="strand" evidence="80">
    <location>
        <begin position="83"/>
        <end position="85"/>
    </location>
</feature>
<feature type="strand" evidence="74">
    <location>
        <begin position="87"/>
        <end position="90"/>
    </location>
</feature>
<feature type="strand" evidence="83">
    <location>
        <begin position="91"/>
        <end position="93"/>
    </location>
</feature>
<feature type="helix" evidence="77">
    <location>
        <begin position="107"/>
        <end position="109"/>
    </location>
</feature>
<feature type="strand" evidence="89">
    <location>
        <begin position="113"/>
        <end position="116"/>
    </location>
</feature>
<feature type="helix" evidence="86">
    <location>
        <begin position="119"/>
        <end position="129"/>
    </location>
</feature>
<feature type="strand" evidence="86">
    <location>
        <begin position="134"/>
        <end position="139"/>
    </location>
</feature>
<feature type="strand" evidence="84">
    <location>
        <begin position="141"/>
        <end position="143"/>
    </location>
</feature>
<feature type="strand" evidence="86">
    <location>
        <begin position="147"/>
        <end position="153"/>
    </location>
</feature>
<feature type="strand" evidence="84">
    <location>
        <begin position="154"/>
        <end position="156"/>
    </location>
</feature>
<feature type="strand" evidence="89">
    <location>
        <begin position="157"/>
        <end position="159"/>
    </location>
</feature>
<feature type="strand" evidence="89">
    <location>
        <begin position="161"/>
        <end position="164"/>
    </location>
</feature>
<feature type="strand" evidence="86">
    <location>
        <begin position="166"/>
        <end position="175"/>
    </location>
</feature>
<feature type="strand" evidence="86">
    <location>
        <begin position="178"/>
        <end position="184"/>
    </location>
</feature>
<feature type="strand" evidence="86">
    <location>
        <begin position="187"/>
        <end position="189"/>
    </location>
</feature>
<feature type="helix" evidence="86">
    <location>
        <begin position="190"/>
        <end position="199"/>
    </location>
</feature>
<feature type="strand" evidence="84">
    <location>
        <begin position="202"/>
        <end position="204"/>
    </location>
</feature>
<feature type="strand" evidence="91">
    <location>
        <begin position="205"/>
        <end position="207"/>
    </location>
</feature>
<feature type="strand" evidence="78">
    <location>
        <begin position="208"/>
        <end position="210"/>
    </location>
</feature>
<feature type="strand" evidence="80">
    <location>
        <begin position="218"/>
        <end position="222"/>
    </location>
</feature>
<feature type="helix" evidence="86">
    <location>
        <begin position="223"/>
        <end position="225"/>
    </location>
</feature>
<feature type="helix" evidence="86">
    <location>
        <begin position="226"/>
        <end position="234"/>
    </location>
</feature>
<feature type="strand" evidence="90">
    <location>
        <begin position="235"/>
        <end position="237"/>
    </location>
</feature>
<feature type="turn" evidence="94">
    <location>
        <begin position="239"/>
        <end position="241"/>
    </location>
</feature>
<feature type="helix" evidence="76">
    <location>
        <begin position="251"/>
        <end position="253"/>
    </location>
</feature>
<feature type="helix" evidence="81">
    <location>
        <begin position="256"/>
        <end position="258"/>
    </location>
</feature>
<feature type="helix" evidence="73">
    <location>
        <begin position="259"/>
        <end position="262"/>
    </location>
</feature>
<feature type="helix" evidence="76">
    <location>
        <begin position="266"/>
        <end position="269"/>
    </location>
</feature>
<feature type="helix" evidence="76">
    <location>
        <begin position="271"/>
        <end position="276"/>
    </location>
</feature>
<feature type="strand" evidence="89">
    <location>
        <begin position="277"/>
        <end position="279"/>
    </location>
</feature>
<feature type="helix" evidence="76">
    <location>
        <begin position="286"/>
        <end position="288"/>
    </location>
</feature>
<feature type="strand" evidence="76">
    <location>
        <begin position="289"/>
        <end position="291"/>
    </location>
</feature>
<feature type="strand" evidence="93">
    <location>
        <begin position="299"/>
        <end position="301"/>
    </location>
</feature>
<feature type="strand" evidence="76">
    <location>
        <begin position="304"/>
        <end position="310"/>
    </location>
</feature>
<feature type="turn" evidence="89">
    <location>
        <begin position="312"/>
        <end position="315"/>
    </location>
</feature>
<feature type="strand" evidence="82">
    <location>
        <begin position="319"/>
        <end position="321"/>
    </location>
</feature>
<feature type="helix" evidence="85">
    <location>
        <begin position="323"/>
        <end position="325"/>
    </location>
</feature>
<feature type="strand" evidence="76">
    <location>
        <begin position="327"/>
        <end position="331"/>
    </location>
</feature>
<feature type="helix" evidence="76">
    <location>
        <begin position="335"/>
        <end position="337"/>
    </location>
</feature>
<feature type="helix" evidence="76">
    <location>
        <begin position="338"/>
        <end position="347"/>
    </location>
</feature>
<feature type="strand" evidence="76">
    <location>
        <begin position="352"/>
        <end position="355"/>
    </location>
</feature>
<feature type="strand" evidence="76">
    <location>
        <begin position="359"/>
        <end position="361"/>
    </location>
</feature>
<feature type="strand" evidence="75">
    <location>
        <begin position="364"/>
        <end position="366"/>
    </location>
</feature>
<feature type="strand" evidence="76">
    <location>
        <begin position="376"/>
        <end position="380"/>
    </location>
</feature>
<feature type="strand" evidence="76">
    <location>
        <begin position="383"/>
        <end position="392"/>
    </location>
</feature>
<feature type="strand" evidence="76">
    <location>
        <begin position="394"/>
        <end position="405"/>
    </location>
</feature>
<feature type="turn" evidence="91">
    <location>
        <begin position="406"/>
        <end position="408"/>
    </location>
</feature>
<feature type="helix" evidence="87">
    <location>
        <begin position="409"/>
        <end position="411"/>
    </location>
</feature>
<feature type="strand" evidence="76">
    <location>
        <begin position="413"/>
        <end position="420"/>
    </location>
</feature>
<feature type="strand" evidence="76">
    <location>
        <begin position="425"/>
        <end position="427"/>
    </location>
</feature>
<feature type="strand" evidence="76">
    <location>
        <begin position="430"/>
        <end position="432"/>
    </location>
</feature>
<feature type="helix" evidence="76">
    <location>
        <begin position="433"/>
        <end position="447"/>
    </location>
</feature>
<feature type="strand" evidence="92">
    <location>
        <begin position="449"/>
        <end position="451"/>
    </location>
</feature>
<feature type="strand" evidence="76">
    <location>
        <begin position="455"/>
        <end position="463"/>
    </location>
</feature>
<feature type="helix" evidence="76">
    <location>
        <begin position="464"/>
        <end position="482"/>
    </location>
</feature>
<feature type="strand" evidence="86">
    <location>
        <begin position="484"/>
        <end position="488"/>
    </location>
</feature>
<feature type="helix" evidence="76">
    <location>
        <begin position="490"/>
        <end position="498"/>
    </location>
</feature>
<feature type="helix" evidence="76">
    <location>
        <begin position="508"/>
        <end position="524"/>
    </location>
</feature>
<feature type="strand" evidence="79">
    <location>
        <begin position="581"/>
        <end position="585"/>
    </location>
</feature>
<dbReference type="EC" id="3.1.3.48" evidence="58 59"/>
<dbReference type="EMBL" id="D13540">
    <property type="protein sequence ID" value="BAA02740.2"/>
    <property type="molecule type" value="mRNA"/>
</dbReference>
<dbReference type="EMBL" id="L03535">
    <property type="protein sequence ID" value="AAA36611.1"/>
    <property type="molecule type" value="mRNA"/>
</dbReference>
<dbReference type="EMBL" id="L07527">
    <property type="protein sequence ID" value="AAA17022.1"/>
    <property type="molecule type" value="mRNA"/>
</dbReference>
<dbReference type="EMBL" id="L08807">
    <property type="status" value="NOT_ANNOTATED_CDS"/>
    <property type="molecule type" value="mRNA"/>
</dbReference>
<dbReference type="EMBL" id="X70766">
    <property type="protein sequence ID" value="CAA50045.1"/>
    <property type="molecule type" value="mRNA"/>
</dbReference>
<dbReference type="EMBL" id="BT007106">
    <property type="protein sequence ID" value="AAP35770.1"/>
    <property type="molecule type" value="mRNA"/>
</dbReference>
<dbReference type="EMBL" id="AK289854">
    <property type="protein sequence ID" value="BAF82543.1"/>
    <property type="molecule type" value="mRNA"/>
</dbReference>
<dbReference type="EMBL" id="CH471054">
    <property type="protein sequence ID" value="EAW98012.1"/>
    <property type="molecule type" value="Genomic_DNA"/>
</dbReference>
<dbReference type="EMBL" id="BC008692">
    <property type="protein sequence ID" value="AAH08692.1"/>
    <property type="molecule type" value="mRNA"/>
</dbReference>
<dbReference type="CCDS" id="CCDS58280.1">
    <molecule id="Q06124-3"/>
</dbReference>
<dbReference type="CCDS" id="CCDS81741.1">
    <molecule id="Q06124-1"/>
</dbReference>
<dbReference type="CCDS" id="CCDS9163.1">
    <molecule id="Q06124-2"/>
</dbReference>
<dbReference type="PIR" id="JN0805">
    <property type="entry name" value="JN0805"/>
</dbReference>
<dbReference type="RefSeq" id="NP_001317366.1">
    <molecule id="Q06124-1"/>
    <property type="nucleotide sequence ID" value="NM_001330437.2"/>
</dbReference>
<dbReference type="RefSeq" id="NP_002825.3">
    <molecule id="Q06124-2"/>
    <property type="nucleotide sequence ID" value="NM_002834.4"/>
</dbReference>
<dbReference type="RefSeq" id="NP_542168.1">
    <molecule id="Q06124-3"/>
    <property type="nucleotide sequence ID" value="NM_080601.3"/>
</dbReference>
<dbReference type="PDB" id="2SHP">
    <property type="method" value="X-ray"/>
    <property type="resolution" value="2.00 A"/>
    <property type="chains" value="A/B=1-525"/>
</dbReference>
<dbReference type="PDB" id="3B7O">
    <property type="method" value="X-ray"/>
    <property type="resolution" value="1.60 A"/>
    <property type="chains" value="A=237-529"/>
</dbReference>
<dbReference type="PDB" id="3MOW">
    <property type="method" value="X-ray"/>
    <property type="resolution" value="2.30 A"/>
    <property type="chains" value="A=262-528"/>
</dbReference>
<dbReference type="PDB" id="3O5X">
    <property type="method" value="X-ray"/>
    <property type="resolution" value="2.00 A"/>
    <property type="chains" value="A=262-528"/>
</dbReference>
<dbReference type="PDB" id="3TKZ">
    <property type="method" value="X-ray"/>
    <property type="resolution" value="1.80 A"/>
    <property type="chains" value="A=1-106"/>
</dbReference>
<dbReference type="PDB" id="3TL0">
    <property type="method" value="X-ray"/>
    <property type="resolution" value="2.05 A"/>
    <property type="chains" value="A=1-106"/>
</dbReference>
<dbReference type="PDB" id="3ZM0">
    <property type="method" value="X-ray"/>
    <property type="resolution" value="1.50 A"/>
    <property type="chains" value="A=248-527"/>
</dbReference>
<dbReference type="PDB" id="3ZM1">
    <property type="method" value="X-ray"/>
    <property type="resolution" value="1.40 A"/>
    <property type="chains" value="A=248-527"/>
</dbReference>
<dbReference type="PDB" id="3ZM2">
    <property type="method" value="X-ray"/>
    <property type="resolution" value="1.50 A"/>
    <property type="chains" value="A=248-527"/>
</dbReference>
<dbReference type="PDB" id="3ZM3">
    <property type="method" value="X-ray"/>
    <property type="resolution" value="1.50 A"/>
    <property type="chains" value="A=248-527"/>
</dbReference>
<dbReference type="PDB" id="4DGP">
    <property type="method" value="X-ray"/>
    <property type="resolution" value="2.30 A"/>
    <property type="chains" value="A=1-528"/>
</dbReference>
<dbReference type="PDB" id="4DGX">
    <property type="method" value="X-ray"/>
    <property type="resolution" value="2.30 A"/>
    <property type="chains" value="A=1-528"/>
</dbReference>
<dbReference type="PDB" id="4GWF">
    <property type="method" value="X-ray"/>
    <property type="resolution" value="2.10 A"/>
    <property type="chains" value="A/B=1-539"/>
</dbReference>
<dbReference type="PDB" id="4H1O">
    <property type="method" value="X-ray"/>
    <property type="resolution" value="2.20 A"/>
    <property type="chains" value="A=1-539"/>
</dbReference>
<dbReference type="PDB" id="4H34">
    <property type="method" value="X-ray"/>
    <property type="resolution" value="2.70 A"/>
    <property type="chains" value="A=1-539"/>
</dbReference>
<dbReference type="PDB" id="4JE4">
    <property type="method" value="X-ray"/>
    <property type="resolution" value="2.31 A"/>
    <property type="chains" value="A=1-103"/>
</dbReference>
<dbReference type="PDB" id="4JEG">
    <property type="method" value="X-ray"/>
    <property type="resolution" value="2.30 A"/>
    <property type="chains" value="A=97-217"/>
</dbReference>
<dbReference type="PDB" id="4JMG">
    <property type="method" value="X-ray"/>
    <property type="resolution" value="1.40 A"/>
    <property type="chains" value="B=575-587"/>
</dbReference>
<dbReference type="PDB" id="4NWF">
    <property type="method" value="X-ray"/>
    <property type="resolution" value="2.10 A"/>
    <property type="chains" value="A/B=1-539"/>
</dbReference>
<dbReference type="PDB" id="4NWG">
    <property type="method" value="X-ray"/>
    <property type="resolution" value="2.45 A"/>
    <property type="chains" value="A/B=1-539"/>
</dbReference>
<dbReference type="PDB" id="4OHD">
    <property type="method" value="X-ray"/>
    <property type="resolution" value="2.70 A"/>
    <property type="chains" value="A=1-528"/>
</dbReference>
<dbReference type="PDB" id="4OHE">
    <property type="method" value="X-ray"/>
    <property type="resolution" value="2.51 A"/>
    <property type="chains" value="A=1-528"/>
</dbReference>
<dbReference type="PDB" id="4OHH">
    <property type="method" value="X-ray"/>
    <property type="resolution" value="2.70 A"/>
    <property type="chains" value="A=1-528"/>
</dbReference>
<dbReference type="PDB" id="4OHI">
    <property type="method" value="X-ray"/>
    <property type="resolution" value="2.20 A"/>
    <property type="chains" value="A=1-528"/>
</dbReference>
<dbReference type="PDB" id="4OHL">
    <property type="method" value="X-ray"/>
    <property type="resolution" value="2.40 A"/>
    <property type="chains" value="A/B=1-528"/>
</dbReference>
<dbReference type="PDB" id="4PVG">
    <property type="method" value="X-ray"/>
    <property type="resolution" value="2.40 A"/>
    <property type="chains" value="A=240-528"/>
</dbReference>
<dbReference type="PDB" id="4QSY">
    <property type="method" value="X-ray"/>
    <property type="resolution" value="2.10 A"/>
    <property type="chains" value="A=1-106"/>
</dbReference>
<dbReference type="PDB" id="4RDD">
    <property type="method" value="X-ray"/>
    <property type="resolution" value="1.60 A"/>
    <property type="chains" value="A=262-528"/>
</dbReference>
<dbReference type="PDB" id="5BK8">
    <property type="method" value="X-ray"/>
    <property type="resolution" value="2.25 A"/>
    <property type="chains" value="A=1-528"/>
</dbReference>
<dbReference type="PDB" id="5DF6">
    <property type="method" value="X-ray"/>
    <property type="resolution" value="1.78 A"/>
    <property type="chains" value="A=1-222"/>
</dbReference>
<dbReference type="PDB" id="5EHP">
    <property type="method" value="X-ray"/>
    <property type="resolution" value="1.85 A"/>
    <property type="chains" value="A/B=1-525"/>
</dbReference>
<dbReference type="PDB" id="5EHR">
    <property type="method" value="X-ray"/>
    <property type="resolution" value="1.70 A"/>
    <property type="chains" value="A/B=1-525"/>
</dbReference>
<dbReference type="PDB" id="5I6V">
    <property type="method" value="X-ray"/>
    <property type="resolution" value="1.87 A"/>
    <property type="chains" value="A/B=1-525"/>
</dbReference>
<dbReference type="PDB" id="5IBM">
    <property type="method" value="X-ray"/>
    <property type="resolution" value="2.18 A"/>
    <property type="chains" value="A/B=1-525"/>
</dbReference>
<dbReference type="PDB" id="5IBS">
    <property type="method" value="X-ray"/>
    <property type="resolution" value="2.32 A"/>
    <property type="chains" value="A/B=1-525"/>
</dbReference>
<dbReference type="PDB" id="5X7B">
    <property type="method" value="X-ray"/>
    <property type="resolution" value="2.45 A"/>
    <property type="chains" value="A=1-220"/>
</dbReference>
<dbReference type="PDB" id="5X94">
    <property type="method" value="X-ray"/>
    <property type="resolution" value="2.60 A"/>
    <property type="chains" value="A/B=1-220"/>
</dbReference>
<dbReference type="PDB" id="5XZR">
    <property type="method" value="X-ray"/>
    <property type="resolution" value="2.80 A"/>
    <property type="chains" value="A=1-534"/>
</dbReference>
<dbReference type="PDB" id="6ATD">
    <property type="method" value="X-ray"/>
    <property type="resolution" value="2.50 A"/>
    <property type="chains" value="A/B=1-526"/>
</dbReference>
<dbReference type="PDB" id="6BMR">
    <property type="method" value="X-ray"/>
    <property type="resolution" value="2.21 A"/>
    <property type="chains" value="A/B=1-525"/>
</dbReference>
<dbReference type="PDB" id="6BMU">
    <property type="method" value="X-ray"/>
    <property type="resolution" value="2.12 A"/>
    <property type="chains" value="A/B=1-525"/>
</dbReference>
<dbReference type="PDB" id="6BMV">
    <property type="method" value="X-ray"/>
    <property type="resolution" value="2.05 A"/>
    <property type="chains" value="A/B=1-525"/>
</dbReference>
<dbReference type="PDB" id="6BMW">
    <property type="method" value="X-ray"/>
    <property type="resolution" value="2.10 A"/>
    <property type="chains" value="A/B=1-525"/>
</dbReference>
<dbReference type="PDB" id="6BMX">
    <property type="method" value="X-ray"/>
    <property type="resolution" value="2.42 A"/>
    <property type="chains" value="A/B=1-525"/>
</dbReference>
<dbReference type="PDB" id="6BMY">
    <property type="method" value="X-ray"/>
    <property type="resolution" value="2.09 A"/>
    <property type="chains" value="A/B=1-525"/>
</dbReference>
<dbReference type="PDB" id="6BN5">
    <property type="method" value="X-ray"/>
    <property type="resolution" value="2.22 A"/>
    <property type="chains" value="A/B=1-525"/>
</dbReference>
<dbReference type="PDB" id="6CMP">
    <property type="method" value="X-ray"/>
    <property type="resolution" value="1.80 A"/>
    <property type="chains" value="A/B=1-529"/>
</dbReference>
<dbReference type="PDB" id="6CMQ">
    <property type="method" value="X-ray"/>
    <property type="resolution" value="2.90 A"/>
    <property type="chains" value="A/B/C/D=106-529"/>
</dbReference>
<dbReference type="PDB" id="6CMR">
    <property type="method" value="X-ray"/>
    <property type="resolution" value="2.21 A"/>
    <property type="chains" value="A=1-529"/>
</dbReference>
<dbReference type="PDB" id="6CMS">
    <property type="method" value="X-ray"/>
    <property type="resolution" value="2.68 A"/>
    <property type="chains" value="A=1-529"/>
</dbReference>
<dbReference type="PDB" id="6CRF">
    <property type="method" value="X-ray"/>
    <property type="resolution" value="2.62 A"/>
    <property type="chains" value="A/B=1-525"/>
</dbReference>
<dbReference type="PDB" id="6CRG">
    <property type="method" value="X-ray"/>
    <property type="resolution" value="2.75 A"/>
    <property type="chains" value="A/B=1-525"/>
</dbReference>
<dbReference type="PDB" id="6MD7">
    <property type="method" value="X-ray"/>
    <property type="resolution" value="1.96 A"/>
    <property type="chains" value="A/B=1-525"/>
</dbReference>
<dbReference type="PDB" id="6MD9">
    <property type="method" value="X-ray"/>
    <property type="resolution" value="2.12 A"/>
    <property type="chains" value="A/B=1-525"/>
</dbReference>
<dbReference type="PDB" id="6MDA">
    <property type="method" value="X-ray"/>
    <property type="resolution" value="2.21 A"/>
    <property type="chains" value="A/B=1-525"/>
</dbReference>
<dbReference type="PDB" id="6MDB">
    <property type="method" value="X-ray"/>
    <property type="resolution" value="2.34 A"/>
    <property type="chains" value="A/B=1-525"/>
</dbReference>
<dbReference type="PDB" id="6MDC">
    <property type="method" value="X-ray"/>
    <property type="resolution" value="2.14 A"/>
    <property type="chains" value="A/B=1-525"/>
</dbReference>
<dbReference type="PDB" id="6MDD">
    <property type="method" value="X-ray"/>
    <property type="resolution" value="2.05 A"/>
    <property type="chains" value="A/B=1-525"/>
</dbReference>
<dbReference type="PDB" id="6R5G">
    <property type="method" value="NMR"/>
    <property type="chains" value="A=105-220"/>
</dbReference>
<dbReference type="PDB" id="6WU8">
    <property type="method" value="X-ray"/>
    <property type="resolution" value="2.40 A"/>
    <property type="chains" value="A/B=1-530"/>
</dbReference>
<dbReference type="PDB" id="7EMN">
    <property type="method" value="X-ray"/>
    <property type="resolution" value="3.00 A"/>
    <property type="chains" value="A/B=1-534"/>
</dbReference>
<dbReference type="PDB" id="7JVM">
    <property type="method" value="X-ray"/>
    <property type="resolution" value="2.17 A"/>
    <property type="chains" value="A/B=1-525"/>
</dbReference>
<dbReference type="PDB" id="7JVN">
    <property type="method" value="X-ray"/>
    <property type="resolution" value="1.92 A"/>
    <property type="chains" value="A/B=1-525"/>
</dbReference>
<dbReference type="PDB" id="7R75">
    <property type="method" value="X-ray"/>
    <property type="resolution" value="2.83 A"/>
    <property type="chains" value="A=1-530"/>
</dbReference>
<dbReference type="PDB" id="7R7D">
    <property type="method" value="X-ray"/>
    <property type="resolution" value="2.60 A"/>
    <property type="chains" value="A/B=1-530"/>
</dbReference>
<dbReference type="PDB" id="7R7I">
    <property type="method" value="X-ray"/>
    <property type="resolution" value="2.85 A"/>
    <property type="chains" value="A/B=1-530"/>
</dbReference>
<dbReference type="PDB" id="7R7L">
    <property type="method" value="X-ray"/>
    <property type="resolution" value="3.00 A"/>
    <property type="chains" value="A/B=1-530"/>
</dbReference>
<dbReference type="PDB" id="7RCT">
    <property type="method" value="X-ray"/>
    <property type="resolution" value="1.80 A"/>
    <property type="chains" value="A/B=1-525"/>
</dbReference>
<dbReference type="PDB" id="7TVJ">
    <property type="method" value="X-ray"/>
    <property type="resolution" value="2.39 A"/>
    <property type="chains" value="A/D=224-525"/>
</dbReference>
<dbReference type="PDB" id="7VXG">
    <property type="method" value="X-ray"/>
    <property type="resolution" value="2.10 A"/>
    <property type="chains" value="A/B/C/D=1-525"/>
</dbReference>
<dbReference type="PDB" id="7XHQ">
    <property type="method" value="X-ray"/>
    <property type="resolution" value="2.20 A"/>
    <property type="chains" value="A/B=1-525"/>
</dbReference>
<dbReference type="PDB" id="8B5Y">
    <property type="method" value="X-ray"/>
    <property type="resolution" value="1.83 A"/>
    <property type="chains" value="A/B=1-525"/>
</dbReference>
<dbReference type="PDB" id="8CBH">
    <property type="method" value="X-ray"/>
    <property type="resolution" value="2.24 A"/>
    <property type="chains" value="A/B=1-525"/>
</dbReference>
<dbReference type="PDB" id="8GWW">
    <property type="method" value="X-ray"/>
    <property type="resolution" value="3.00 A"/>
    <property type="chains" value="A/B=1-525"/>
</dbReference>
<dbReference type="PDB" id="8RZW">
    <property type="method" value="X-ray"/>
    <property type="resolution" value="2.02 A"/>
    <property type="chains" value="A/B=1-528"/>
</dbReference>
<dbReference type="PDB" id="8RZY">
    <property type="method" value="X-ray"/>
    <property type="resolution" value="1.91 A"/>
    <property type="chains" value="A/B=1-528"/>
</dbReference>
<dbReference type="PDB" id="8S01">
    <property type="method" value="X-ray"/>
    <property type="resolution" value="2.17 A"/>
    <property type="chains" value="A/B=1-528"/>
</dbReference>
<dbReference type="PDB" id="8S04">
    <property type="method" value="X-ray"/>
    <property type="resolution" value="1.89 A"/>
    <property type="chains" value="A/B=1-528"/>
</dbReference>
<dbReference type="PDB" id="8S06">
    <property type="method" value="X-ray"/>
    <property type="resolution" value="2.19 A"/>
    <property type="chains" value="A/B=1-528"/>
</dbReference>
<dbReference type="PDB" id="8S07">
    <property type="method" value="X-ray"/>
    <property type="resolution" value="1.83 A"/>
    <property type="chains" value="A/B=1-528"/>
</dbReference>
<dbReference type="PDB" id="8S0H">
    <property type="method" value="X-ray"/>
    <property type="resolution" value="1.99 A"/>
    <property type="chains" value="A/B=1-528"/>
</dbReference>
<dbReference type="PDB" id="8S0I">
    <property type="method" value="X-ray"/>
    <property type="resolution" value="1.93 A"/>
    <property type="chains" value="A/B=1-528"/>
</dbReference>
<dbReference type="PDB" id="8S0J">
    <property type="method" value="X-ray"/>
    <property type="resolution" value="1.89 A"/>
    <property type="chains" value="A/B=1-528"/>
</dbReference>
<dbReference type="PDB" id="8S0K">
    <property type="method" value="X-ray"/>
    <property type="resolution" value="1.84 A"/>
    <property type="chains" value="A/B=1-528"/>
</dbReference>
<dbReference type="PDB" id="8S0O">
    <property type="method" value="X-ray"/>
    <property type="resolution" value="1.83 A"/>
    <property type="chains" value="A/B=1-528"/>
</dbReference>
<dbReference type="PDB" id="8S0P">
    <property type="method" value="X-ray"/>
    <property type="resolution" value="2.00 A"/>
    <property type="chains" value="A/B=1-528"/>
</dbReference>
<dbReference type="PDB" id="8S0Q">
    <property type="method" value="X-ray"/>
    <property type="resolution" value="1.87 A"/>
    <property type="chains" value="A/B=1-528"/>
</dbReference>
<dbReference type="PDB" id="8S0S">
    <property type="method" value="X-ray"/>
    <property type="resolution" value="1.94 A"/>
    <property type="chains" value="A/B=1-528"/>
</dbReference>
<dbReference type="PDB" id="8T6D">
    <property type="method" value="X-ray"/>
    <property type="resolution" value="2.40 A"/>
    <property type="chains" value="A/B=1-525"/>
</dbReference>
<dbReference type="PDB" id="8T6G">
    <property type="method" value="X-ray"/>
    <property type="resolution" value="1.84 A"/>
    <property type="chains" value="A/B=1-525"/>
</dbReference>
<dbReference type="PDB" id="8T7Q">
    <property type="method" value="X-ray"/>
    <property type="resolution" value="2.10 A"/>
    <property type="chains" value="A/B=1-525"/>
</dbReference>
<dbReference type="PDB" id="8T8Q">
    <property type="method" value="X-ray"/>
    <property type="resolution" value="2.27 A"/>
    <property type="chains" value="A/B=1-525"/>
</dbReference>
<dbReference type="PDB" id="8U7W">
    <property type="method" value="X-ray"/>
    <property type="resolution" value="2.05 A"/>
    <property type="chains" value="A/B=1-525"/>
</dbReference>
<dbReference type="PDB" id="8U7X">
    <property type="method" value="X-ray"/>
    <property type="resolution" value="2.06 A"/>
    <property type="chains" value="A/B=1-525"/>
</dbReference>
<dbReference type="PDB" id="8WFY">
    <property type="method" value="X-ray"/>
    <property type="resolution" value="2.60 A"/>
    <property type="chains" value="A/B=1-525"/>
</dbReference>
<dbReference type="PDB" id="8WX7">
    <property type="method" value="X-ray"/>
    <property type="resolution" value="2.02 A"/>
    <property type="chains" value="A/B=1-525"/>
</dbReference>
<dbReference type="PDB" id="9BLG">
    <property type="method" value="X-ray"/>
    <property type="resolution" value="2.06 A"/>
    <property type="chains" value="A/B=1-525"/>
</dbReference>
<dbReference type="PDBsum" id="2SHP"/>
<dbReference type="PDBsum" id="3B7O"/>
<dbReference type="PDBsum" id="3MOW"/>
<dbReference type="PDBsum" id="3O5X"/>
<dbReference type="PDBsum" id="3TKZ"/>
<dbReference type="PDBsum" id="3TL0"/>
<dbReference type="PDBsum" id="3ZM0"/>
<dbReference type="PDBsum" id="3ZM1"/>
<dbReference type="PDBsum" id="3ZM2"/>
<dbReference type="PDBsum" id="3ZM3"/>
<dbReference type="PDBsum" id="4DGP"/>
<dbReference type="PDBsum" id="4DGX"/>
<dbReference type="PDBsum" id="4GWF"/>
<dbReference type="PDBsum" id="4H1O"/>
<dbReference type="PDBsum" id="4H34"/>
<dbReference type="PDBsum" id="4JE4"/>
<dbReference type="PDBsum" id="4JEG"/>
<dbReference type="PDBsum" id="4JMG"/>
<dbReference type="PDBsum" id="4NWF"/>
<dbReference type="PDBsum" id="4NWG"/>
<dbReference type="PDBsum" id="4OHD"/>
<dbReference type="PDBsum" id="4OHE"/>
<dbReference type="PDBsum" id="4OHH"/>
<dbReference type="PDBsum" id="4OHI"/>
<dbReference type="PDBsum" id="4OHL"/>
<dbReference type="PDBsum" id="4PVG"/>
<dbReference type="PDBsum" id="4QSY"/>
<dbReference type="PDBsum" id="4RDD"/>
<dbReference type="PDBsum" id="5BK8"/>
<dbReference type="PDBsum" id="5DF6"/>
<dbReference type="PDBsum" id="5EHP"/>
<dbReference type="PDBsum" id="5EHR"/>
<dbReference type="PDBsum" id="5I6V"/>
<dbReference type="PDBsum" id="5IBM"/>
<dbReference type="PDBsum" id="5IBS"/>
<dbReference type="PDBsum" id="5X7B"/>
<dbReference type="PDBsum" id="5X94"/>
<dbReference type="PDBsum" id="5XZR"/>
<dbReference type="PDBsum" id="6ATD"/>
<dbReference type="PDBsum" id="6BMR"/>
<dbReference type="PDBsum" id="6BMU"/>
<dbReference type="PDBsum" id="6BMV"/>
<dbReference type="PDBsum" id="6BMW"/>
<dbReference type="PDBsum" id="6BMX"/>
<dbReference type="PDBsum" id="6BMY"/>
<dbReference type="PDBsum" id="6BN5"/>
<dbReference type="PDBsum" id="6CMP"/>
<dbReference type="PDBsum" id="6CMQ"/>
<dbReference type="PDBsum" id="6CMR"/>
<dbReference type="PDBsum" id="6CMS"/>
<dbReference type="PDBsum" id="6CRF"/>
<dbReference type="PDBsum" id="6CRG"/>
<dbReference type="PDBsum" id="6MD7"/>
<dbReference type="PDBsum" id="6MD9"/>
<dbReference type="PDBsum" id="6MDA"/>
<dbReference type="PDBsum" id="6MDB"/>
<dbReference type="PDBsum" id="6MDC"/>
<dbReference type="PDBsum" id="6MDD"/>
<dbReference type="PDBsum" id="6R5G"/>
<dbReference type="PDBsum" id="6WU8"/>
<dbReference type="PDBsum" id="7EMN"/>
<dbReference type="PDBsum" id="7JVM"/>
<dbReference type="PDBsum" id="7JVN"/>
<dbReference type="PDBsum" id="7R75"/>
<dbReference type="PDBsum" id="7R7D"/>
<dbReference type="PDBsum" id="7R7I"/>
<dbReference type="PDBsum" id="7R7L"/>
<dbReference type="PDBsum" id="7RCT"/>
<dbReference type="PDBsum" id="7TVJ"/>
<dbReference type="PDBsum" id="7VXG"/>
<dbReference type="PDBsum" id="7XHQ"/>
<dbReference type="PDBsum" id="8B5Y"/>
<dbReference type="PDBsum" id="8CBH"/>
<dbReference type="PDBsum" id="8GWW"/>
<dbReference type="PDBsum" id="8RZW"/>
<dbReference type="PDBsum" id="8RZY"/>
<dbReference type="PDBsum" id="8S01"/>
<dbReference type="PDBsum" id="8S04"/>
<dbReference type="PDBsum" id="8S06"/>
<dbReference type="PDBsum" id="8S07"/>
<dbReference type="PDBsum" id="8S0H"/>
<dbReference type="PDBsum" id="8S0I"/>
<dbReference type="PDBsum" id="8S0J"/>
<dbReference type="PDBsum" id="8S0K"/>
<dbReference type="PDBsum" id="8S0O"/>
<dbReference type="PDBsum" id="8S0P"/>
<dbReference type="PDBsum" id="8S0Q"/>
<dbReference type="PDBsum" id="8S0S"/>
<dbReference type="PDBsum" id="8T6D"/>
<dbReference type="PDBsum" id="8T6G"/>
<dbReference type="PDBsum" id="8T7Q"/>
<dbReference type="PDBsum" id="8T8Q"/>
<dbReference type="PDBsum" id="8U7W"/>
<dbReference type="PDBsum" id="8U7X"/>
<dbReference type="PDBsum" id="8WFY"/>
<dbReference type="PDBsum" id="8WX7"/>
<dbReference type="PDBsum" id="9BLG"/>
<dbReference type="SASBDB" id="Q06124"/>
<dbReference type="SMR" id="Q06124"/>
<dbReference type="BioGRID" id="111745">
    <property type="interactions" value="338"/>
</dbReference>
<dbReference type="CORUM" id="Q06124"/>
<dbReference type="DIP" id="DIP-516N"/>
<dbReference type="ELM" id="Q06124"/>
<dbReference type="FunCoup" id="Q06124">
    <property type="interactions" value="4285"/>
</dbReference>
<dbReference type="IntAct" id="Q06124">
    <property type="interactions" value="235"/>
</dbReference>
<dbReference type="MINT" id="Q06124"/>
<dbReference type="STRING" id="9606.ENSP00000489597"/>
<dbReference type="BindingDB" id="Q06124"/>
<dbReference type="ChEMBL" id="CHEMBL3864"/>
<dbReference type="DrugBank" id="DB02779">
    <property type="generic name" value="Dodecyltrimethylammonium"/>
</dbReference>
<dbReference type="DrugBank" id="DB17131">
    <property type="generic name" value="JAB-3068"/>
</dbReference>
<dbReference type="DrugCentral" id="Q06124"/>
<dbReference type="GuidetoPHARMACOLOGY" id="3203"/>
<dbReference type="MoonDB" id="Q06124">
    <property type="type" value="Predicted"/>
</dbReference>
<dbReference type="DEPOD" id="PTPN11"/>
<dbReference type="GlyGen" id="Q06124">
    <property type="glycosylation" value="3 sites, 1 O-linked glycan (1 site)"/>
</dbReference>
<dbReference type="iPTMnet" id="Q06124"/>
<dbReference type="MetOSite" id="Q06124"/>
<dbReference type="PhosphoSitePlus" id="Q06124"/>
<dbReference type="SwissPalm" id="Q06124"/>
<dbReference type="BioMuta" id="PTPN11"/>
<dbReference type="DMDM" id="84028248"/>
<dbReference type="CPTAC" id="CPTAC-1556"/>
<dbReference type="jPOST" id="Q06124"/>
<dbReference type="MassIVE" id="Q06124"/>
<dbReference type="PaxDb" id="9606-ENSP00000340944"/>
<dbReference type="PeptideAtlas" id="Q06124"/>
<dbReference type="ProteomicsDB" id="58414">
    <molecule id="Q06124-1"/>
</dbReference>
<dbReference type="ProteomicsDB" id="58415">
    <molecule id="Q06124-2"/>
</dbReference>
<dbReference type="ProteomicsDB" id="58416">
    <molecule id="Q06124-3"/>
</dbReference>
<dbReference type="Pumba" id="Q06124"/>
<dbReference type="TopDownProteomics" id="Q06124-2">
    <molecule id="Q06124-2"/>
</dbReference>
<dbReference type="ABCD" id="Q06124">
    <property type="antibodies" value="7 sequenced antibodies"/>
</dbReference>
<dbReference type="Antibodypedia" id="3948">
    <property type="antibodies" value="1467 antibodies from 47 providers"/>
</dbReference>
<dbReference type="CPTC" id="Q06124">
    <property type="antibodies" value="2 antibodies"/>
</dbReference>
<dbReference type="DNASU" id="5781"/>
<dbReference type="Ensembl" id="ENST00000351677.7">
    <molecule id="Q06124-2"/>
    <property type="protein sequence ID" value="ENSP00000340944.3"/>
    <property type="gene ID" value="ENSG00000179295.19"/>
</dbReference>
<dbReference type="Ensembl" id="ENST00000392597.5">
    <molecule id="Q06124-3"/>
    <property type="protein sequence ID" value="ENSP00000376376.1"/>
    <property type="gene ID" value="ENSG00000179295.19"/>
</dbReference>
<dbReference type="Ensembl" id="ENST00000635625.1">
    <molecule id="Q06124-1"/>
    <property type="protein sequence ID" value="ENSP00000489597.1"/>
    <property type="gene ID" value="ENSG00000179295.19"/>
</dbReference>
<dbReference type="GeneID" id="5781"/>
<dbReference type="KEGG" id="hsa:5781"/>
<dbReference type="MANE-Select" id="ENST00000351677.7">
    <property type="protein sequence ID" value="ENSP00000340944.3"/>
    <property type="RefSeq nucleotide sequence ID" value="NM_002834.5"/>
    <property type="RefSeq protein sequence ID" value="NP_002825.3"/>
</dbReference>
<dbReference type="UCSC" id="uc001ttw.2">
    <molecule id="Q06124-2"/>
    <property type="organism name" value="human"/>
</dbReference>
<dbReference type="AGR" id="HGNC:9644"/>
<dbReference type="CTD" id="5781"/>
<dbReference type="DisGeNET" id="5781"/>
<dbReference type="GeneCards" id="PTPN11"/>
<dbReference type="GeneReviews" id="PTPN11"/>
<dbReference type="HGNC" id="HGNC:9644">
    <property type="gene designation" value="PTPN11"/>
</dbReference>
<dbReference type="HPA" id="ENSG00000179295">
    <property type="expression patterns" value="Low tissue specificity"/>
</dbReference>
<dbReference type="MalaCards" id="PTPN11"/>
<dbReference type="MIM" id="151100">
    <property type="type" value="phenotype"/>
</dbReference>
<dbReference type="MIM" id="156250">
    <property type="type" value="phenotype"/>
</dbReference>
<dbReference type="MIM" id="163950">
    <property type="type" value="phenotype"/>
</dbReference>
<dbReference type="MIM" id="176876">
    <property type="type" value="gene"/>
</dbReference>
<dbReference type="MIM" id="607785">
    <property type="type" value="phenotype"/>
</dbReference>
<dbReference type="neXtProt" id="NX_Q06124"/>
<dbReference type="OpenTargets" id="ENSG00000179295"/>
<dbReference type="Orphanet" id="86834">
    <property type="disease" value="Juvenile myelomonocytic leukemia"/>
</dbReference>
<dbReference type="Orphanet" id="2499">
    <property type="disease" value="Metachondromatosis"/>
</dbReference>
<dbReference type="Orphanet" id="648">
    <property type="disease" value="Noonan syndrome"/>
</dbReference>
<dbReference type="Orphanet" id="500">
    <property type="disease" value="Noonan syndrome with multiple lentigines"/>
</dbReference>
<dbReference type="PharmGKB" id="PA33986"/>
<dbReference type="VEuPathDB" id="HostDB:ENSG00000179295"/>
<dbReference type="eggNOG" id="KOG0790">
    <property type="taxonomic scope" value="Eukaryota"/>
</dbReference>
<dbReference type="GeneTree" id="ENSGT00940000153876"/>
<dbReference type="HOGENOM" id="CLU_001645_9_10_1"/>
<dbReference type="InParanoid" id="Q06124"/>
<dbReference type="OMA" id="NGWLWNG"/>
<dbReference type="OrthoDB" id="8815311at2759"/>
<dbReference type="PAN-GO" id="Q06124">
    <property type="GO annotations" value="6 GO annotations based on evolutionary models"/>
</dbReference>
<dbReference type="PhylomeDB" id="Q06124"/>
<dbReference type="TreeFam" id="TF351632"/>
<dbReference type="BRENDA" id="3.1.3.48">
    <property type="organism ID" value="2681"/>
</dbReference>
<dbReference type="PathwayCommons" id="Q06124"/>
<dbReference type="Reactome" id="R-HSA-1059683">
    <property type="pathway name" value="Interleukin-6 signaling"/>
</dbReference>
<dbReference type="Reactome" id="R-HSA-109704">
    <property type="pathway name" value="PI3K Cascade"/>
</dbReference>
<dbReference type="Reactome" id="R-HSA-110056">
    <property type="pathway name" value="MAPK3 (ERK1) activation"/>
</dbReference>
<dbReference type="Reactome" id="R-HSA-112411">
    <property type="pathway name" value="MAPK1 (ERK2) activation"/>
</dbReference>
<dbReference type="Reactome" id="R-HSA-114604">
    <property type="pathway name" value="GPVI-mediated activation cascade"/>
</dbReference>
<dbReference type="Reactome" id="R-HSA-1170546">
    <property type="pathway name" value="Prolactin receptor signaling"/>
</dbReference>
<dbReference type="Reactome" id="R-HSA-1257604">
    <property type="pathway name" value="PIP3 activates AKT signaling"/>
</dbReference>
<dbReference type="Reactome" id="R-HSA-1295596">
    <property type="pathway name" value="Spry regulation of FGF signaling"/>
</dbReference>
<dbReference type="Reactome" id="R-HSA-1433557">
    <property type="pathway name" value="Signaling by SCF-KIT"/>
</dbReference>
<dbReference type="Reactome" id="R-HSA-180292">
    <property type="pathway name" value="GAB1 signalosome"/>
</dbReference>
<dbReference type="Reactome" id="R-HSA-186763">
    <property type="pathway name" value="Downstream signal transduction"/>
</dbReference>
<dbReference type="Reactome" id="R-HSA-210990">
    <property type="pathway name" value="PECAM1 interactions"/>
</dbReference>
<dbReference type="Reactome" id="R-HSA-210993">
    <property type="pathway name" value="Tie2 Signaling"/>
</dbReference>
<dbReference type="Reactome" id="R-HSA-2219530">
    <property type="pathway name" value="Constitutive Signaling by Aberrant PI3K in Cancer"/>
</dbReference>
<dbReference type="Reactome" id="R-HSA-2586552">
    <property type="pathway name" value="Signaling by Leptin"/>
</dbReference>
<dbReference type="Reactome" id="R-HSA-389513">
    <property type="pathway name" value="Co-inhibition by CTLA4"/>
</dbReference>
<dbReference type="Reactome" id="R-HSA-389948">
    <property type="pathway name" value="Co-inhibition by PD-1"/>
</dbReference>
<dbReference type="Reactome" id="R-HSA-391160">
    <property type="pathway name" value="Signal regulatory protein family interactions"/>
</dbReference>
<dbReference type="Reactome" id="R-HSA-418886">
    <property type="pathway name" value="Netrin mediated repulsion signals"/>
</dbReference>
<dbReference type="Reactome" id="R-HSA-432142">
    <property type="pathway name" value="Platelet sensitization by LDL"/>
</dbReference>
<dbReference type="Reactome" id="R-HSA-512988">
    <property type="pathway name" value="Interleukin-3, Interleukin-5 and GM-CSF signaling"/>
</dbReference>
<dbReference type="Reactome" id="R-HSA-5654689">
    <property type="pathway name" value="PI-3K cascade:FGFR1"/>
</dbReference>
<dbReference type="Reactome" id="R-HSA-5654693">
    <property type="pathway name" value="FRS-mediated FGFR1 signaling"/>
</dbReference>
<dbReference type="Reactome" id="R-HSA-5654695">
    <property type="pathway name" value="PI-3K cascade:FGFR2"/>
</dbReference>
<dbReference type="Reactome" id="R-HSA-5654700">
    <property type="pathway name" value="FRS-mediated FGFR2 signaling"/>
</dbReference>
<dbReference type="Reactome" id="R-HSA-5654706">
    <property type="pathway name" value="FRS-mediated FGFR3 signaling"/>
</dbReference>
<dbReference type="Reactome" id="R-HSA-5654710">
    <property type="pathway name" value="PI-3K cascade:FGFR3"/>
</dbReference>
<dbReference type="Reactome" id="R-HSA-5654712">
    <property type="pathway name" value="FRS-mediated FGFR4 signaling"/>
</dbReference>
<dbReference type="Reactome" id="R-HSA-5654720">
    <property type="pathway name" value="PI-3K cascade:FGFR4"/>
</dbReference>
<dbReference type="Reactome" id="R-HSA-5654726">
    <property type="pathway name" value="Negative regulation of FGFR1 signaling"/>
</dbReference>
<dbReference type="Reactome" id="R-HSA-5654727">
    <property type="pathway name" value="Negative regulation of FGFR2 signaling"/>
</dbReference>
<dbReference type="Reactome" id="R-HSA-5654732">
    <property type="pathway name" value="Negative regulation of FGFR3 signaling"/>
</dbReference>
<dbReference type="Reactome" id="R-HSA-5654733">
    <property type="pathway name" value="Negative regulation of FGFR4 signaling"/>
</dbReference>
<dbReference type="Reactome" id="R-HSA-6811558">
    <property type="pathway name" value="PI5P, PP2A and IER3 Regulate PI3K/AKT Signaling"/>
</dbReference>
<dbReference type="Reactome" id="R-HSA-877312">
    <property type="pathway name" value="Regulation of IFNG signaling"/>
</dbReference>
<dbReference type="Reactome" id="R-HSA-8853659">
    <property type="pathway name" value="RET signaling"/>
</dbReference>
<dbReference type="Reactome" id="R-HSA-8854691">
    <property type="pathway name" value="Interleukin-20 family signaling"/>
</dbReference>
<dbReference type="Reactome" id="R-HSA-8865999">
    <property type="pathway name" value="MET activates PTPN11"/>
</dbReference>
<dbReference type="Reactome" id="R-HSA-8934593">
    <property type="pathway name" value="Regulation of RUNX1 Expression and Activity"/>
</dbReference>
<dbReference type="Reactome" id="R-HSA-9008059">
    <property type="pathway name" value="Interleukin-37 signaling"/>
</dbReference>
<dbReference type="Reactome" id="R-HSA-9028731">
    <property type="pathway name" value="Activated NTRK2 signals through FRS2 and FRS3"/>
</dbReference>
<dbReference type="Reactome" id="R-HSA-909733">
    <property type="pathway name" value="Interferon alpha/beta signaling"/>
</dbReference>
<dbReference type="Reactome" id="R-HSA-912694">
    <property type="pathway name" value="Regulation of IFNA/IFNB signaling"/>
</dbReference>
<dbReference type="Reactome" id="R-HSA-936964">
    <property type="pathway name" value="Activation of IRF3, IRF7 mediated by TBK1, IKKEpsilon (IKBKE)"/>
</dbReference>
<dbReference type="Reactome" id="R-HSA-9607240">
    <property type="pathway name" value="FLT3 Signaling"/>
</dbReference>
<dbReference type="Reactome" id="R-HSA-9645135">
    <property type="pathway name" value="STAT5 Activation"/>
</dbReference>
<dbReference type="Reactome" id="R-HSA-9674555">
    <property type="pathway name" value="Signaling by CSF3 (G-CSF)"/>
</dbReference>
<dbReference type="Reactome" id="R-HSA-9680350">
    <property type="pathway name" value="Signaling by CSF1 (M-CSF) in myeloid cells"/>
</dbReference>
<dbReference type="Reactome" id="R-HSA-9702518">
    <property type="pathway name" value="STAT5 activation downstream of FLT3 ITD mutants"/>
</dbReference>
<dbReference type="Reactome" id="R-HSA-9703648">
    <property type="pathway name" value="Signaling by FLT3 ITD and TKD mutants"/>
</dbReference>
<dbReference type="Reactome" id="R-HSA-9705671">
    <property type="pathway name" value="SARS-CoV-2 activates/modulates innate and adaptive immune responses"/>
</dbReference>
<dbReference type="Reactome" id="R-HSA-9927353">
    <property type="pathway name" value="Co-inhibition by BTLA"/>
</dbReference>
<dbReference type="SABIO-RK" id="Q06124"/>
<dbReference type="SignaLink" id="Q06124"/>
<dbReference type="SIGNOR" id="Q06124"/>
<dbReference type="BioGRID-ORCS" id="5781">
    <property type="hits" value="554 hits in 1181 CRISPR screens"/>
</dbReference>
<dbReference type="CD-CODE" id="FB4E32DD">
    <property type="entry name" value="Presynaptic clusters and postsynaptic densities"/>
</dbReference>
<dbReference type="ChiTaRS" id="PTPN11">
    <property type="organism name" value="human"/>
</dbReference>
<dbReference type="EvolutionaryTrace" id="Q06124"/>
<dbReference type="GeneWiki" id="PTPN11"/>
<dbReference type="GenomeRNAi" id="5781"/>
<dbReference type="Pharos" id="Q06124">
    <property type="development level" value="Tchem"/>
</dbReference>
<dbReference type="PRO" id="PR:Q06124"/>
<dbReference type="Proteomes" id="UP000005640">
    <property type="component" value="Chromosome 12"/>
</dbReference>
<dbReference type="RNAct" id="Q06124">
    <property type="molecule type" value="protein"/>
</dbReference>
<dbReference type="Bgee" id="ENSG00000179295">
    <property type="expression patterns" value="Expressed in medial globus pallidus and 210 other cell types or tissues"/>
</dbReference>
<dbReference type="ExpressionAtlas" id="Q06124">
    <property type="expression patterns" value="baseline and differential"/>
</dbReference>
<dbReference type="GO" id="GO:0005737">
    <property type="term" value="C:cytoplasm"/>
    <property type="evidence" value="ECO:0000314"/>
    <property type="project" value="UniProtKB"/>
</dbReference>
<dbReference type="GO" id="GO:0005829">
    <property type="term" value="C:cytosol"/>
    <property type="evidence" value="ECO:0000304"/>
    <property type="project" value="Reactome"/>
</dbReference>
<dbReference type="GO" id="GO:0005739">
    <property type="term" value="C:mitochondrion"/>
    <property type="evidence" value="ECO:0006056"/>
    <property type="project" value="FlyBase"/>
</dbReference>
<dbReference type="GO" id="GO:0005654">
    <property type="term" value="C:nucleoplasm"/>
    <property type="evidence" value="ECO:0000304"/>
    <property type="project" value="Reactome"/>
</dbReference>
<dbReference type="GO" id="GO:0005634">
    <property type="term" value="C:nucleus"/>
    <property type="evidence" value="ECO:0000314"/>
    <property type="project" value="UniProtKB"/>
</dbReference>
<dbReference type="GO" id="GO:0032991">
    <property type="term" value="C:protein-containing complex"/>
    <property type="evidence" value="ECO:0000315"/>
    <property type="project" value="UniProtKB"/>
</dbReference>
<dbReference type="GO" id="GO:0045296">
    <property type="term" value="F:cadherin binding"/>
    <property type="evidence" value="ECO:0000353"/>
    <property type="project" value="ARUK-UCL"/>
</dbReference>
<dbReference type="GO" id="GO:0050839">
    <property type="term" value="F:cell adhesion molecule binding"/>
    <property type="evidence" value="ECO:0000353"/>
    <property type="project" value="ARUK-UCL"/>
</dbReference>
<dbReference type="GO" id="GO:0005158">
    <property type="term" value="F:insulin receptor binding"/>
    <property type="evidence" value="ECO:0000353"/>
    <property type="project" value="BHF-UCL"/>
</dbReference>
<dbReference type="GO" id="GO:0060090">
    <property type="term" value="F:molecular adaptor activity"/>
    <property type="evidence" value="ECO:0000314"/>
    <property type="project" value="UniProt"/>
</dbReference>
<dbReference type="GO" id="GO:0004726">
    <property type="term" value="F:non-membrane spanning protein tyrosine phosphatase activity"/>
    <property type="evidence" value="ECO:0000314"/>
    <property type="project" value="FlyBase"/>
</dbReference>
<dbReference type="GO" id="GO:0051428">
    <property type="term" value="F:peptide hormone receptor binding"/>
    <property type="evidence" value="ECO:0007669"/>
    <property type="project" value="Ensembl"/>
</dbReference>
<dbReference type="GO" id="GO:0004721">
    <property type="term" value="F:phosphoprotein phosphatase activity"/>
    <property type="evidence" value="ECO:0000314"/>
    <property type="project" value="UniProtKB"/>
</dbReference>
<dbReference type="GO" id="GO:0001784">
    <property type="term" value="F:phosphotyrosine residue binding"/>
    <property type="evidence" value="ECO:0000353"/>
    <property type="project" value="UniProtKB"/>
</dbReference>
<dbReference type="GO" id="GO:0019901">
    <property type="term" value="F:protein kinase binding"/>
    <property type="evidence" value="ECO:0000250"/>
    <property type="project" value="ARUK-UCL"/>
</dbReference>
<dbReference type="GO" id="GO:1990782">
    <property type="term" value="F:protein tyrosine kinase binding"/>
    <property type="evidence" value="ECO:0000353"/>
    <property type="project" value="ARUK-UCL"/>
</dbReference>
<dbReference type="GO" id="GO:0004725">
    <property type="term" value="F:protein tyrosine phosphatase activity"/>
    <property type="evidence" value="ECO:0000314"/>
    <property type="project" value="UniProtKB"/>
</dbReference>
<dbReference type="GO" id="GO:0030971">
    <property type="term" value="F:receptor tyrosine kinase binding"/>
    <property type="evidence" value="ECO:0000318"/>
    <property type="project" value="GO_Central"/>
</dbReference>
<dbReference type="GO" id="GO:0030159">
    <property type="term" value="F:signaling receptor complex adaptor activity"/>
    <property type="evidence" value="ECO:0000353"/>
    <property type="project" value="BHF-UCL"/>
</dbReference>
<dbReference type="GO" id="GO:0036302">
    <property type="term" value="P:atrioventricular canal development"/>
    <property type="evidence" value="ECO:0000315"/>
    <property type="project" value="BHF-UCL"/>
</dbReference>
<dbReference type="GO" id="GO:0007409">
    <property type="term" value="P:axonogenesis"/>
    <property type="evidence" value="ECO:0007669"/>
    <property type="project" value="Ensembl"/>
</dbReference>
<dbReference type="GO" id="GO:0060020">
    <property type="term" value="P:Bergmann glial cell differentiation"/>
    <property type="evidence" value="ECO:0007669"/>
    <property type="project" value="Ensembl"/>
</dbReference>
<dbReference type="GO" id="GO:0007420">
    <property type="term" value="P:brain development"/>
    <property type="evidence" value="ECO:0000315"/>
    <property type="project" value="BHF-UCL"/>
</dbReference>
<dbReference type="GO" id="GO:0071364">
    <property type="term" value="P:cellular response to epidermal growth factor stimulus"/>
    <property type="evidence" value="ECO:0000315"/>
    <property type="project" value="UniProtKB"/>
</dbReference>
<dbReference type="GO" id="GO:0071260">
    <property type="term" value="P:cellular response to mechanical stimulus"/>
    <property type="evidence" value="ECO:0000315"/>
    <property type="project" value="ARUK-UCL"/>
</dbReference>
<dbReference type="GO" id="GO:0021697">
    <property type="term" value="P:cerebellar cortex formation"/>
    <property type="evidence" value="ECO:0007669"/>
    <property type="project" value="Ensembl"/>
</dbReference>
<dbReference type="GO" id="GO:0019221">
    <property type="term" value="P:cytokine-mediated signaling pathway"/>
    <property type="evidence" value="ECO:0000304"/>
    <property type="project" value="Reactome"/>
</dbReference>
<dbReference type="GO" id="GO:0000077">
    <property type="term" value="P:DNA damage checkpoint signaling"/>
    <property type="evidence" value="ECO:0007669"/>
    <property type="project" value="Ensembl"/>
</dbReference>
<dbReference type="GO" id="GO:0048013">
    <property type="term" value="P:ephrin receptor signaling pathway"/>
    <property type="evidence" value="ECO:0000314"/>
    <property type="project" value="UniProtKB"/>
</dbReference>
<dbReference type="GO" id="GO:0007173">
    <property type="term" value="P:epidermal growth factor receptor signaling pathway"/>
    <property type="evidence" value="ECO:0000304"/>
    <property type="project" value="Reactome"/>
</dbReference>
<dbReference type="GO" id="GO:0038127">
    <property type="term" value="P:ERBB signaling pathway"/>
    <property type="evidence" value="ECO:0000314"/>
    <property type="project" value="UniProtKB"/>
</dbReference>
<dbReference type="GO" id="GO:0060325">
    <property type="term" value="P:face morphogenesis"/>
    <property type="evidence" value="ECO:0000315"/>
    <property type="project" value="BHF-UCL"/>
</dbReference>
<dbReference type="GO" id="GO:0008543">
    <property type="term" value="P:fibroblast growth factor receptor signaling pathway"/>
    <property type="evidence" value="ECO:0000315"/>
    <property type="project" value="FlyBase"/>
</dbReference>
<dbReference type="GO" id="GO:0048806">
    <property type="term" value="P:genitalia development"/>
    <property type="evidence" value="ECO:0000315"/>
    <property type="project" value="BHF-UCL"/>
</dbReference>
<dbReference type="GO" id="GO:0042593">
    <property type="term" value="P:glucose homeostasis"/>
    <property type="evidence" value="ECO:0007669"/>
    <property type="project" value="Ensembl"/>
</dbReference>
<dbReference type="GO" id="GO:0007507">
    <property type="term" value="P:heart development"/>
    <property type="evidence" value="ECO:0000315"/>
    <property type="project" value="BHF-UCL"/>
</dbReference>
<dbReference type="GO" id="GO:0048873">
    <property type="term" value="P:homeostasis of number of cells within a tissue"/>
    <property type="evidence" value="ECO:0007669"/>
    <property type="project" value="Ensembl"/>
</dbReference>
<dbReference type="GO" id="GO:0042445">
    <property type="term" value="P:hormone metabolic process"/>
    <property type="evidence" value="ECO:0007669"/>
    <property type="project" value="Ensembl"/>
</dbReference>
<dbReference type="GO" id="GO:0009755">
    <property type="term" value="P:hormone-mediated signaling pathway"/>
    <property type="evidence" value="ECO:0007669"/>
    <property type="project" value="Ensembl"/>
</dbReference>
<dbReference type="GO" id="GO:0048839">
    <property type="term" value="P:inner ear development"/>
    <property type="evidence" value="ECO:0000315"/>
    <property type="project" value="BHF-UCL"/>
</dbReference>
<dbReference type="GO" id="GO:0007229">
    <property type="term" value="P:integrin-mediated signaling pathway"/>
    <property type="evidence" value="ECO:0007669"/>
    <property type="project" value="Ensembl"/>
</dbReference>
<dbReference type="GO" id="GO:0061582">
    <property type="term" value="P:intestinal epithelial cell migration"/>
    <property type="evidence" value="ECO:0007669"/>
    <property type="project" value="Ensembl"/>
</dbReference>
<dbReference type="GO" id="GO:0035855">
    <property type="term" value="P:megakaryocyte development"/>
    <property type="evidence" value="ECO:0007669"/>
    <property type="project" value="Ensembl"/>
</dbReference>
<dbReference type="GO" id="GO:0032528">
    <property type="term" value="P:microvillus organization"/>
    <property type="evidence" value="ECO:0007669"/>
    <property type="project" value="Ensembl"/>
</dbReference>
<dbReference type="GO" id="GO:0035264">
    <property type="term" value="P:multicellular organism growth"/>
    <property type="evidence" value="ECO:0007669"/>
    <property type="project" value="Ensembl"/>
</dbReference>
<dbReference type="GO" id="GO:0033629">
    <property type="term" value="P:negative regulation of cell adhesion mediated by integrin"/>
    <property type="evidence" value="ECO:0007669"/>
    <property type="project" value="Ensembl"/>
</dbReference>
<dbReference type="GO" id="GO:0032331">
    <property type="term" value="P:negative regulation of chondrocyte differentiation"/>
    <property type="evidence" value="ECO:0000250"/>
    <property type="project" value="UniProtKB"/>
</dbReference>
<dbReference type="GO" id="GO:0051463">
    <property type="term" value="P:negative regulation of cortisol secretion"/>
    <property type="evidence" value="ECO:0007669"/>
    <property type="project" value="Ensembl"/>
</dbReference>
<dbReference type="GO" id="GO:0060125">
    <property type="term" value="P:negative regulation of growth hormone secretion"/>
    <property type="evidence" value="ECO:0007669"/>
    <property type="project" value="Ensembl"/>
</dbReference>
<dbReference type="GO" id="GO:0046676">
    <property type="term" value="P:negative regulation of insulin secretion"/>
    <property type="evidence" value="ECO:0007669"/>
    <property type="project" value="Ensembl"/>
</dbReference>
<dbReference type="GO" id="GO:1902564">
    <property type="term" value="P:negative regulation of neutrophil activation"/>
    <property type="evidence" value="ECO:0000314"/>
    <property type="project" value="UniProt"/>
</dbReference>
<dbReference type="GO" id="GO:0042130">
    <property type="term" value="P:negative regulation of T cell proliferation"/>
    <property type="evidence" value="ECO:0000314"/>
    <property type="project" value="UniProt"/>
</dbReference>
<dbReference type="GO" id="GO:0032480">
    <property type="term" value="P:negative regulation of type I interferon production"/>
    <property type="evidence" value="ECO:0000314"/>
    <property type="project" value="UniProt"/>
</dbReference>
<dbReference type="GO" id="GO:0048011">
    <property type="term" value="P:neurotrophin TRK receptor signaling pathway"/>
    <property type="evidence" value="ECO:0007669"/>
    <property type="project" value="Ensembl"/>
</dbReference>
<dbReference type="GO" id="GO:0035265">
    <property type="term" value="P:organ growth"/>
    <property type="evidence" value="ECO:0007669"/>
    <property type="project" value="Ensembl"/>
</dbReference>
<dbReference type="GO" id="GO:0035335">
    <property type="term" value="P:peptidyl-tyrosine dephosphorylation"/>
    <property type="evidence" value="ECO:0000314"/>
    <property type="project" value="UniProtKB"/>
</dbReference>
<dbReference type="GO" id="GO:0030220">
    <property type="term" value="P:platelet formation"/>
    <property type="evidence" value="ECO:0007669"/>
    <property type="project" value="Ensembl"/>
</dbReference>
<dbReference type="GO" id="GO:0048008">
    <property type="term" value="P:platelet-derived growth factor receptor signaling pathway"/>
    <property type="evidence" value="ECO:0007669"/>
    <property type="project" value="Ensembl"/>
</dbReference>
<dbReference type="GO" id="GO:0046326">
    <property type="term" value="P:positive regulation of D-glucose import"/>
    <property type="evidence" value="ECO:0000314"/>
    <property type="project" value="BHF-UCL"/>
</dbReference>
<dbReference type="GO" id="GO:0070374">
    <property type="term" value="P:positive regulation of ERK1 and ERK2 cascade"/>
    <property type="evidence" value="ECO:0000315"/>
    <property type="project" value="UniProtKB"/>
</dbReference>
<dbReference type="GO" id="GO:0046887">
    <property type="term" value="P:positive regulation of hormone secretion"/>
    <property type="evidence" value="ECO:0007669"/>
    <property type="project" value="Ensembl"/>
</dbReference>
<dbReference type="GO" id="GO:0046628">
    <property type="term" value="P:positive regulation of insulin receptor signaling pathway"/>
    <property type="evidence" value="ECO:0000314"/>
    <property type="project" value="BHF-UCL"/>
</dbReference>
<dbReference type="GO" id="GO:0032728">
    <property type="term" value="P:positive regulation of interferon-beta production"/>
    <property type="evidence" value="ECO:0000250"/>
    <property type="project" value="ARUK-UCL"/>
</dbReference>
<dbReference type="GO" id="GO:1902533">
    <property type="term" value="P:positive regulation of intracellular signal transduction"/>
    <property type="evidence" value="ECO:0000315"/>
    <property type="project" value="ARUK-UCL"/>
</dbReference>
<dbReference type="GO" id="GO:0031666">
    <property type="term" value="P:positive regulation of lipopolysaccharide-mediated signaling pathway"/>
    <property type="evidence" value="ECO:0000250"/>
    <property type="project" value="ARUK-UCL"/>
</dbReference>
<dbReference type="GO" id="GO:0045931">
    <property type="term" value="P:positive regulation of mitotic cell cycle"/>
    <property type="evidence" value="ECO:0007669"/>
    <property type="project" value="Ensembl"/>
</dbReference>
<dbReference type="GO" id="GO:0045778">
    <property type="term" value="P:positive regulation of ossification"/>
    <property type="evidence" value="ECO:0000250"/>
    <property type="project" value="UniProtKB"/>
</dbReference>
<dbReference type="GO" id="GO:0051897">
    <property type="term" value="P:positive regulation of phosphatidylinositol 3-kinase/protein kinase B signal transduction"/>
    <property type="evidence" value="ECO:0000315"/>
    <property type="project" value="ARUK-UCL"/>
</dbReference>
<dbReference type="GO" id="GO:0032760">
    <property type="term" value="P:positive regulation of tumor necrosis factor production"/>
    <property type="evidence" value="ECO:0000250"/>
    <property type="project" value="ARUK-UCL"/>
</dbReference>
<dbReference type="GO" id="GO:0033628">
    <property type="term" value="P:regulation of cell adhesion mediated by integrin"/>
    <property type="evidence" value="ECO:0000315"/>
    <property type="project" value="UniProtKB"/>
</dbReference>
<dbReference type="GO" id="GO:0046825">
    <property type="term" value="P:regulation of protein export from nucleus"/>
    <property type="evidence" value="ECO:0007669"/>
    <property type="project" value="Ensembl"/>
</dbReference>
<dbReference type="GO" id="GO:0043254">
    <property type="term" value="P:regulation of protein-containing complex assembly"/>
    <property type="evidence" value="ECO:0000314"/>
    <property type="project" value="BHF-UCL"/>
</dbReference>
<dbReference type="GO" id="GO:0060338">
    <property type="term" value="P:regulation of type I interferon-mediated signaling pathway"/>
    <property type="evidence" value="ECO:0000304"/>
    <property type="project" value="Reactome"/>
</dbReference>
<dbReference type="GO" id="GO:0031295">
    <property type="term" value="P:T cell costimulation"/>
    <property type="evidence" value="ECO:0000304"/>
    <property type="project" value="Reactome"/>
</dbReference>
<dbReference type="GO" id="GO:0006641">
    <property type="term" value="P:triglyceride metabolic process"/>
    <property type="evidence" value="ECO:0007669"/>
    <property type="project" value="Ensembl"/>
</dbReference>
<dbReference type="GO" id="GO:0042311">
    <property type="term" value="P:vasodilation"/>
    <property type="evidence" value="ECO:0000315"/>
    <property type="project" value="ARUK-UCL"/>
</dbReference>
<dbReference type="CDD" id="cd14605">
    <property type="entry name" value="PTPc-N11"/>
    <property type="match status" value="1"/>
</dbReference>
<dbReference type="CDD" id="cd09931">
    <property type="entry name" value="SH2_C-SH2_SHP_like"/>
    <property type="match status" value="1"/>
</dbReference>
<dbReference type="CDD" id="cd10340">
    <property type="entry name" value="SH2_N-SH2_SHP_like"/>
    <property type="match status" value="1"/>
</dbReference>
<dbReference type="FunFam" id="3.30.505.10:FF:000012">
    <property type="entry name" value="Tyrosine-protein phosphatase non-receptor type"/>
    <property type="match status" value="1"/>
</dbReference>
<dbReference type="FunFam" id="3.30.505.10:FF:000018">
    <property type="entry name" value="Tyrosine-protein phosphatase non-receptor type"/>
    <property type="match status" value="1"/>
</dbReference>
<dbReference type="FunFam" id="3.90.190.10:FF:000018">
    <property type="entry name" value="Tyrosine-protein phosphatase non-receptor type"/>
    <property type="match status" value="1"/>
</dbReference>
<dbReference type="Gene3D" id="3.90.190.10">
    <property type="entry name" value="Protein tyrosine phosphatase superfamily"/>
    <property type="match status" value="1"/>
</dbReference>
<dbReference type="Gene3D" id="3.30.505.10">
    <property type="entry name" value="SH2 domain"/>
    <property type="match status" value="2"/>
</dbReference>
<dbReference type="InterPro" id="IPR029021">
    <property type="entry name" value="Prot-tyrosine_phosphatase-like"/>
</dbReference>
<dbReference type="InterPro" id="IPR000242">
    <property type="entry name" value="PTP_cat"/>
</dbReference>
<dbReference type="InterPro" id="IPR000980">
    <property type="entry name" value="SH2"/>
</dbReference>
<dbReference type="InterPro" id="IPR036860">
    <property type="entry name" value="SH2_dom_sf"/>
</dbReference>
<dbReference type="InterPro" id="IPR016130">
    <property type="entry name" value="Tyr_Pase_AS"/>
</dbReference>
<dbReference type="InterPro" id="IPR003595">
    <property type="entry name" value="Tyr_Pase_cat"/>
</dbReference>
<dbReference type="InterPro" id="IPR000387">
    <property type="entry name" value="Tyr_Pase_dom"/>
</dbReference>
<dbReference type="InterPro" id="IPR012152">
    <property type="entry name" value="Tyr_Pase_non-rcpt_typ-6/11"/>
</dbReference>
<dbReference type="PANTHER" id="PTHR46559">
    <property type="entry name" value="TYROSINE-PROTEIN PHOSPHATASE NON-RECEPTOR TYPE 11"/>
    <property type="match status" value="1"/>
</dbReference>
<dbReference type="PANTHER" id="PTHR46559:SF1">
    <property type="entry name" value="TYROSINE-PROTEIN PHOSPHATASE NON-RECEPTOR TYPE 11"/>
    <property type="match status" value="1"/>
</dbReference>
<dbReference type="Pfam" id="PF00017">
    <property type="entry name" value="SH2"/>
    <property type="match status" value="2"/>
</dbReference>
<dbReference type="Pfam" id="PF00102">
    <property type="entry name" value="Y_phosphatase"/>
    <property type="match status" value="1"/>
</dbReference>
<dbReference type="PIRSF" id="PIRSF000929">
    <property type="entry name" value="Tyr-Ptase_nr_6"/>
    <property type="match status" value="1"/>
</dbReference>
<dbReference type="PRINTS" id="PR00700">
    <property type="entry name" value="PRTYPHPHTASE"/>
</dbReference>
<dbReference type="PRINTS" id="PR00401">
    <property type="entry name" value="SH2DOMAIN"/>
</dbReference>
<dbReference type="SMART" id="SM00194">
    <property type="entry name" value="PTPc"/>
    <property type="match status" value="1"/>
</dbReference>
<dbReference type="SMART" id="SM00404">
    <property type="entry name" value="PTPc_motif"/>
    <property type="match status" value="1"/>
</dbReference>
<dbReference type="SMART" id="SM00252">
    <property type="entry name" value="SH2"/>
    <property type="match status" value="2"/>
</dbReference>
<dbReference type="SUPFAM" id="SSF52799">
    <property type="entry name" value="(Phosphotyrosine protein) phosphatases II"/>
    <property type="match status" value="1"/>
</dbReference>
<dbReference type="SUPFAM" id="SSF55550">
    <property type="entry name" value="SH2 domain"/>
    <property type="match status" value="2"/>
</dbReference>
<dbReference type="PROSITE" id="PS50001">
    <property type="entry name" value="SH2"/>
    <property type="match status" value="2"/>
</dbReference>
<dbReference type="PROSITE" id="PS00383">
    <property type="entry name" value="TYR_PHOSPHATASE_1"/>
    <property type="match status" value="1"/>
</dbReference>
<dbReference type="PROSITE" id="PS50056">
    <property type="entry name" value="TYR_PHOSPHATASE_2"/>
    <property type="match status" value="1"/>
</dbReference>
<dbReference type="PROSITE" id="PS50055">
    <property type="entry name" value="TYR_PHOSPHATASE_PTP"/>
    <property type="match status" value="1"/>
</dbReference>
<keyword id="KW-0002">3D-structure</keyword>
<keyword id="KW-0007">Acetylation</keyword>
<keyword id="KW-0025">Alternative splicing</keyword>
<keyword id="KW-0963">Cytoplasm</keyword>
<keyword id="KW-0209">Deafness</keyword>
<keyword id="KW-0225">Disease variant</keyword>
<keyword id="KW-0378">Hydrolase</keyword>
<keyword id="KW-0539">Nucleus</keyword>
<keyword id="KW-0597">Phosphoprotein</keyword>
<keyword id="KW-0904">Protein phosphatase</keyword>
<keyword id="KW-1267">Proteomics identification</keyword>
<keyword id="KW-1185">Reference proteome</keyword>
<keyword id="KW-0677">Repeat</keyword>
<keyword id="KW-0727">SH2 domain</keyword>
<reference key="1">
    <citation type="journal article" date="1992" name="FEBS Lett.">
        <title>Molecular cloning of a novel protein-tyrosine phosphatase SH-PTP3 with sequence similarity to the src-homology region 2.</title>
        <authorList>
            <person name="Adachi M."/>
            <person name="Sekiya M."/>
            <person name="Miyachi T."/>
            <person name="Matsuno K."/>
            <person name="Hinoda Y."/>
            <person name="Imai K."/>
            <person name="Yachi A."/>
        </authorList>
    </citation>
    <scope>NUCLEOTIDE SEQUENCE [MRNA] (ISOFORM 1)</scope>
    <source>
        <tissue>T-cell</tissue>
    </source>
</reference>
<reference key="2">
    <citation type="journal article" date="1992" name="Proc. Natl. Acad. Sci. U.S.A.">
        <title>Identification of a human src homology 2-containing protein-tyrosine-phosphatase: a putative homolog of Drosophila corkscrew.</title>
        <authorList>
            <person name="Freeman R.M. Jr."/>
            <person name="Plutzky J."/>
            <person name="Neel B.G."/>
        </authorList>
    </citation>
    <scope>NUCLEOTIDE SEQUENCE [MRNA] (ISOFORM 1)</scope>
    <scope>TISSUE SPECIFICITY</scope>
</reference>
<reference key="3">
    <citation type="journal article" date="1993" name="Biochem. Biophys. Res. Commun.">
        <title>Cloning, expression and mutational analysis of SH-PTP2, human protein-tyrosine phosphatase.</title>
        <authorList>
            <person name="Bastien L."/>
            <person name="Ramachandran C."/>
            <person name="Liu S."/>
            <person name="Adam M."/>
        </authorList>
    </citation>
    <scope>NUCLEOTIDE SEQUENCE [MRNA] (ISOFORM 1)</scope>
    <scope>MUTAGENESIS OF CYS-459</scope>
    <scope>TISSUE SPECIFICITY</scope>
</reference>
<reference key="4">
    <citation type="journal article" date="1993" name="Proc. Natl. Acad. Sci. U.S.A.">
        <title>A widely expressed human protein-tyrosine phosphatase containing src homology 2 domains.</title>
        <authorList>
            <person name="Ahmad S."/>
            <person name="Banville D.L."/>
            <person name="Zhao Z."/>
            <person name="Fischer E.H."/>
            <person name="Shen S.H."/>
        </authorList>
    </citation>
    <scope>NUCLEOTIDE SEQUENCE [MRNA] (ISOFORMS 1 AND 2)</scope>
    <scope>TISSUE SPECIFICITY</scope>
    <source>
        <tissue>Umbilical cord</tissue>
    </source>
</reference>
<reference key="5">
    <citation type="journal article" date="1993" name="Science">
        <title>Activation of a phosphotyrosine phosphatase by tyrosine phosphorylation.</title>
        <authorList>
            <person name="Vogel W."/>
            <person name="Lammers R."/>
            <person name="Huang J."/>
            <person name="Ullrich A."/>
        </authorList>
    </citation>
    <scope>NUCLEOTIDE SEQUENCE [MRNA] (ISOFORM 1)</scope>
    <scope>PHOSPHORYLATION</scope>
</reference>
<reference key="6">
    <citation type="submission" date="2003-05" db="EMBL/GenBank/DDBJ databases">
        <title>Cloning of human full-length CDSs in BD Creator(TM) system donor vector.</title>
        <authorList>
            <person name="Kalnine N."/>
            <person name="Chen X."/>
            <person name="Rolfs A."/>
            <person name="Halleck A."/>
            <person name="Hines L."/>
            <person name="Eisenstein S."/>
            <person name="Koundinya M."/>
            <person name="Raphael J."/>
            <person name="Moreira D."/>
            <person name="Kelley T."/>
            <person name="LaBaer J."/>
            <person name="Lin Y."/>
            <person name="Phelan M."/>
            <person name="Farmer A."/>
        </authorList>
    </citation>
    <scope>NUCLEOTIDE SEQUENCE [LARGE SCALE MRNA] (ISOFORM 3)</scope>
</reference>
<reference key="7">
    <citation type="journal article" date="2004" name="Nat. Genet.">
        <title>Complete sequencing and characterization of 21,243 full-length human cDNAs.</title>
        <authorList>
            <person name="Ota T."/>
            <person name="Suzuki Y."/>
            <person name="Nishikawa T."/>
            <person name="Otsuki T."/>
            <person name="Sugiyama T."/>
            <person name="Irie R."/>
            <person name="Wakamatsu A."/>
            <person name="Hayashi K."/>
            <person name="Sato H."/>
            <person name="Nagai K."/>
            <person name="Kimura K."/>
            <person name="Makita H."/>
            <person name="Sekine M."/>
            <person name="Obayashi M."/>
            <person name="Nishi T."/>
            <person name="Shibahara T."/>
            <person name="Tanaka T."/>
            <person name="Ishii S."/>
            <person name="Yamamoto J."/>
            <person name="Saito K."/>
            <person name="Kawai Y."/>
            <person name="Isono Y."/>
            <person name="Nakamura Y."/>
            <person name="Nagahari K."/>
            <person name="Murakami K."/>
            <person name="Yasuda T."/>
            <person name="Iwayanagi T."/>
            <person name="Wagatsuma M."/>
            <person name="Shiratori A."/>
            <person name="Sudo H."/>
            <person name="Hosoiri T."/>
            <person name="Kaku Y."/>
            <person name="Kodaira H."/>
            <person name="Kondo H."/>
            <person name="Sugawara M."/>
            <person name="Takahashi M."/>
            <person name="Kanda K."/>
            <person name="Yokoi T."/>
            <person name="Furuya T."/>
            <person name="Kikkawa E."/>
            <person name="Omura Y."/>
            <person name="Abe K."/>
            <person name="Kamihara K."/>
            <person name="Katsuta N."/>
            <person name="Sato K."/>
            <person name="Tanikawa M."/>
            <person name="Yamazaki M."/>
            <person name="Ninomiya K."/>
            <person name="Ishibashi T."/>
            <person name="Yamashita H."/>
            <person name="Murakawa K."/>
            <person name="Fujimori K."/>
            <person name="Tanai H."/>
            <person name="Kimata M."/>
            <person name="Watanabe M."/>
            <person name="Hiraoka S."/>
            <person name="Chiba Y."/>
            <person name="Ishida S."/>
            <person name="Ono Y."/>
            <person name="Takiguchi S."/>
            <person name="Watanabe S."/>
            <person name="Yosida M."/>
            <person name="Hotuta T."/>
            <person name="Kusano J."/>
            <person name="Kanehori K."/>
            <person name="Takahashi-Fujii A."/>
            <person name="Hara H."/>
            <person name="Tanase T.-O."/>
            <person name="Nomura Y."/>
            <person name="Togiya S."/>
            <person name="Komai F."/>
            <person name="Hara R."/>
            <person name="Takeuchi K."/>
            <person name="Arita M."/>
            <person name="Imose N."/>
            <person name="Musashino K."/>
            <person name="Yuuki H."/>
            <person name="Oshima A."/>
            <person name="Sasaki N."/>
            <person name="Aotsuka S."/>
            <person name="Yoshikawa Y."/>
            <person name="Matsunawa H."/>
            <person name="Ichihara T."/>
            <person name="Shiohata N."/>
            <person name="Sano S."/>
            <person name="Moriya S."/>
            <person name="Momiyama H."/>
            <person name="Satoh N."/>
            <person name="Takami S."/>
            <person name="Terashima Y."/>
            <person name="Suzuki O."/>
            <person name="Nakagawa S."/>
            <person name="Senoh A."/>
            <person name="Mizoguchi H."/>
            <person name="Goto Y."/>
            <person name="Shimizu F."/>
            <person name="Wakebe H."/>
            <person name="Hishigaki H."/>
            <person name="Watanabe T."/>
            <person name="Sugiyama A."/>
            <person name="Takemoto M."/>
            <person name="Kawakami B."/>
            <person name="Yamazaki M."/>
            <person name="Watanabe K."/>
            <person name="Kumagai A."/>
            <person name="Itakura S."/>
            <person name="Fukuzumi Y."/>
            <person name="Fujimori Y."/>
            <person name="Komiyama M."/>
            <person name="Tashiro H."/>
            <person name="Tanigami A."/>
            <person name="Fujiwara T."/>
            <person name="Ono T."/>
            <person name="Yamada K."/>
            <person name="Fujii Y."/>
            <person name="Ozaki K."/>
            <person name="Hirao M."/>
            <person name="Ohmori Y."/>
            <person name="Kawabata A."/>
            <person name="Hikiji T."/>
            <person name="Kobatake N."/>
            <person name="Inagaki H."/>
            <person name="Ikema Y."/>
            <person name="Okamoto S."/>
            <person name="Okitani R."/>
            <person name="Kawakami T."/>
            <person name="Noguchi S."/>
            <person name="Itoh T."/>
            <person name="Shigeta K."/>
            <person name="Senba T."/>
            <person name="Matsumura K."/>
            <person name="Nakajima Y."/>
            <person name="Mizuno T."/>
            <person name="Morinaga M."/>
            <person name="Sasaki M."/>
            <person name="Togashi T."/>
            <person name="Oyama M."/>
            <person name="Hata H."/>
            <person name="Watanabe M."/>
            <person name="Komatsu T."/>
            <person name="Mizushima-Sugano J."/>
            <person name="Satoh T."/>
            <person name="Shirai Y."/>
            <person name="Takahashi Y."/>
            <person name="Nakagawa K."/>
            <person name="Okumura K."/>
            <person name="Nagase T."/>
            <person name="Nomura N."/>
            <person name="Kikuchi H."/>
            <person name="Masuho Y."/>
            <person name="Yamashita R."/>
            <person name="Nakai K."/>
            <person name="Yada T."/>
            <person name="Nakamura Y."/>
            <person name="Ohara O."/>
            <person name="Isogai T."/>
            <person name="Sugano S."/>
        </authorList>
    </citation>
    <scope>NUCLEOTIDE SEQUENCE [LARGE SCALE MRNA] (ISOFORM 1)</scope>
    <source>
        <tissue>Brain</tissue>
    </source>
</reference>
<reference key="8">
    <citation type="submission" date="2005-07" db="EMBL/GenBank/DDBJ databases">
        <authorList>
            <person name="Mural R.J."/>
            <person name="Istrail S."/>
            <person name="Sutton G.G."/>
            <person name="Florea L."/>
            <person name="Halpern A.L."/>
            <person name="Mobarry C.M."/>
            <person name="Lippert R."/>
            <person name="Walenz B."/>
            <person name="Shatkay H."/>
            <person name="Dew I."/>
            <person name="Miller J.R."/>
            <person name="Flanigan M.J."/>
            <person name="Edwards N.J."/>
            <person name="Bolanos R."/>
            <person name="Fasulo D."/>
            <person name="Halldorsson B.V."/>
            <person name="Hannenhalli S."/>
            <person name="Turner R."/>
            <person name="Yooseph S."/>
            <person name="Lu F."/>
            <person name="Nusskern D.R."/>
            <person name="Shue B.C."/>
            <person name="Zheng X.H."/>
            <person name="Zhong F."/>
            <person name="Delcher A.L."/>
            <person name="Huson D.H."/>
            <person name="Kravitz S.A."/>
            <person name="Mouchard L."/>
            <person name="Reinert K."/>
            <person name="Remington K.A."/>
            <person name="Clark A.G."/>
            <person name="Waterman M.S."/>
            <person name="Eichler E.E."/>
            <person name="Adams M.D."/>
            <person name="Hunkapiller M.W."/>
            <person name="Myers E.W."/>
            <person name="Venter J.C."/>
        </authorList>
    </citation>
    <scope>NUCLEOTIDE SEQUENCE [LARGE SCALE GENOMIC DNA]</scope>
</reference>
<reference key="9">
    <citation type="journal article" date="2004" name="Genome Res.">
        <title>The status, quality, and expansion of the NIH full-length cDNA project: the Mammalian Gene Collection (MGC).</title>
        <authorList>
            <consortium name="The MGC Project Team"/>
        </authorList>
    </citation>
    <scope>NUCLEOTIDE SEQUENCE [LARGE SCALE MRNA] (ISOFORM 3)</scope>
    <source>
        <tissue>Eye</tissue>
    </source>
</reference>
<reference key="10">
    <citation type="journal article" date="1993" name="J. Biol. Chem.">
        <title>Activation of the SH2-containing phosphotyrosine phosphatase SH-PTP2 by its binding site, phosphotyrosine 1009, on the human platelet-derived growth factor receptor.</title>
        <authorList>
            <person name="Lechleider R.J."/>
            <person name="Sugimoto S."/>
            <person name="Bennett A.M."/>
            <person name="Kashishian A.S."/>
            <person name="Cooper J.A."/>
            <person name="Shoelson S.E."/>
            <person name="Walsh C.T."/>
            <person name="Neel B.G."/>
        </authorList>
    </citation>
    <scope>PHOSPHORYLATION</scope>
    <scope>INTERACTION WITH PDGFRB</scope>
</reference>
<reference key="11">
    <citation type="journal article" date="1994" name="Proc. Natl. Acad. Sci. U.S.A.">
        <title>Protein-tyrosine-phosphatase SHPTP2 couples platelet-derived growth factor receptor beta to Ras.</title>
        <authorList>
            <person name="Bennett A.M."/>
            <person name="Tang T.L."/>
            <person name="Sugimoto S."/>
            <person name="Walsh C.T."/>
            <person name="Neel B.G."/>
        </authorList>
    </citation>
    <scope>PHOSPHORYLATION BY PDGFRB</scope>
</reference>
<reference key="12">
    <citation type="journal article" date="1996" name="J. Biol. Chem.">
        <title>Activation of protein-tyrosine phosphatase SH-PTP2 by a tyrosine-based activation motif of a novel brain molecule.</title>
        <authorList>
            <person name="Ohnishi H."/>
            <person name="Kubota M."/>
            <person name="Ohtake A."/>
            <person name="Sato K."/>
            <person name="Sano S."/>
        </authorList>
    </citation>
    <scope>INTERACTION WITH PTPNS1</scope>
</reference>
<reference key="13">
    <citation type="journal article" date="1997" name="Nature">
        <title>A family of proteins that inhibit signalling through tyrosine kinase receptors.</title>
        <authorList>
            <person name="Kharitonenkov A."/>
            <person name="Chen Z."/>
            <person name="Sures I."/>
            <person name="Wang H."/>
            <person name="Schilling J."/>
            <person name="Ullrich A."/>
        </authorList>
    </citation>
    <scope>INTERACTION WITH PTPNS1</scope>
</reference>
<reference key="14">
    <citation type="journal article" date="1998" name="Biochem. Biophys. Res. Commun.">
        <title>Tyrosine 1213 of Flt-1 is a major binding site of Nck and SHP-2.</title>
        <authorList>
            <person name="Igarashi K."/>
            <person name="Isohara T."/>
            <person name="Kato T."/>
            <person name="Shigeta K."/>
            <person name="Yamano T."/>
            <person name="Uno I."/>
        </authorList>
    </citation>
    <scope>INTERACTION WITH FLT1</scope>
</reference>
<reference key="15">
    <citation type="journal article" date="1999" name="Blood">
        <title>Gab-family adapter proteins act downstream of cytokine and growth factor receptors and T- and B-cell antigen receptors.</title>
        <authorList>
            <person name="Nishida K."/>
            <person name="Yoshida Y."/>
            <person name="Itoh M."/>
            <person name="Fukada T."/>
            <person name="Ohtani T."/>
            <person name="Shirogane T."/>
            <person name="Atsumi T."/>
            <person name="Takahashi-Tezuka M."/>
            <person name="Ishihara K."/>
            <person name="Hibi M."/>
            <person name="Hirano T."/>
        </authorList>
    </citation>
    <scope>INTERACTION WITH GAB2</scope>
</reference>
<reference key="16">
    <citation type="journal article" date="1999" name="J. Exp. Med.">
        <title>SHP2-interacting transmembrane adaptor protein (SIT), a novel disulfide-linked dimer regulating human T-cell activation.</title>
        <authorList>
            <person name="Marie-Cardine A."/>
            <person name="Kirchgessner H."/>
            <person name="Bruyns E."/>
            <person name="Shevchenko A."/>
            <person name="Mann M."/>
            <person name="Autschbach F."/>
            <person name="Ratnofsky S."/>
            <person name="Meuer S."/>
            <person name="Schraven B."/>
        </authorList>
    </citation>
    <scope>INTERACTION WITH SIT1</scope>
</reference>
<reference key="17">
    <citation type="journal article" date="2000" name="Nat. Cell Biol.">
        <title>Activation of EphA2 kinase suppresses integrin function and causes focal-adhesion-kinase dephosphorylation.</title>
        <authorList>
            <person name="Miao H."/>
            <person name="Burnett E."/>
            <person name="Kinch M."/>
            <person name="Simon E."/>
            <person name="Wang B."/>
        </authorList>
    </citation>
    <scope>FUNCTION</scope>
    <scope>INTERACTION WITH EPHA2</scope>
</reference>
<reference key="18">
    <citation type="journal article" date="2000" name="J. Biol. Chem.">
        <title>Dissecting the interaction of SHP-2 with PZR, an immunoglobulin family protein containing immunoreceptor tyrosine-based inhibitory motifs.</title>
        <authorList>
            <person name="Zhao R."/>
            <person name="Zhao Z.J."/>
        </authorList>
    </citation>
    <scope>INTERACTION WITH MZPL1</scope>
    <scope>DEPHOSPHORYLATION OF MZPL1</scope>
</reference>
<reference key="19">
    <citation type="journal article" date="2001" name="Biochem. Biophys. Res. Commun.">
        <title>Molecular cloning and characterization of SPAP1, an inhibitory receptor.</title>
        <authorList>
            <person name="Xu M.-J."/>
            <person name="Zhao R."/>
            <person name="Zhao Z.J."/>
        </authorList>
    </citation>
    <scope>INTERACTION WITH FCRL3</scope>
</reference>
<reference key="20">
    <citation type="journal article" date="2001" name="Blood">
        <title>Cell surface receptors Ly-9 and CD84 recruit the X-linked lymphoproliferative disease gene product SAP.</title>
        <authorList>
            <person name="Sayos J."/>
            <person name="Martin M."/>
            <person name="Chen A."/>
            <person name="Simarro M."/>
            <person name="Howie D."/>
            <person name="Morra M."/>
            <person name="Engel P."/>
            <person name="Terhorst C."/>
        </authorList>
    </citation>
    <scope>INTERACTION WITH CD84</scope>
</reference>
<reference key="21">
    <citation type="journal article" date="2001" name="Clin. Immunol.">
        <title>Distinct interactions of the X-linked lymphoproliferative syndrome gene product SAP with cytoplasmic domains of members of the CD2 receptor family.</title>
        <authorList>
            <person name="Lewis J."/>
            <person name="Eiben L.J."/>
            <person name="Nelson D.L."/>
            <person name="Cohen J.I."/>
            <person name="Nichols K.E."/>
            <person name="Ochs H.D."/>
            <person name="Notarangelo L.D."/>
            <person name="Duckett C.S."/>
        </authorList>
    </citation>
    <scope>INTERACTION WITH CD84</scope>
</reference>
<reference key="22">
    <citation type="journal article" date="2001" name="Eur. J. Immunol.">
        <title>Structural and functional dissection of the cytoplasmic domain of the transmembrane adaptor protein SIT (SHP2-interacting transmembrane adaptor protein).</title>
        <authorList>
            <person name="Pfrepper K.-I."/>
            <person name="Marie-Cardine A."/>
            <person name="Simeoni L."/>
            <person name="Kuramitsu Y."/>
            <person name="Leo A."/>
            <person name="Spicka J."/>
            <person name="Hilgert I."/>
            <person name="Scherer J."/>
            <person name="Schraven B."/>
        </authorList>
    </citation>
    <scope>INTERACTION WITH SIT1</scope>
</reference>
<reference key="23">
    <citation type="journal article" date="2003" name="Mol. Biol. Cell">
        <title>Identification of Fer tyrosine kinase localized on microtubules as a platelet endothelial cell adhesion molecule-1 phosphorylating kinase in vascular endothelial cells.</title>
        <authorList>
            <person name="Kogata N."/>
            <person name="Masuda M."/>
            <person name="Kamioka Y."/>
            <person name="Yamagishi A."/>
            <person name="Endo A."/>
            <person name="Okada M."/>
            <person name="Mochizuki N."/>
        </authorList>
    </citation>
    <scope>INTERACTION WITH FER AND PECAM1</scope>
</reference>
<reference key="24">
    <citation type="journal article" date="2003" name="Proc. Natl. Acad. Sci. U.S.A.">
        <title>The inhibitory potential of Fc receptor homolog 4 on memory B cells.</title>
        <authorList>
            <person name="Ehrhardt G.R.A."/>
            <person name="Davis R.S."/>
            <person name="Hsu J.T."/>
            <person name="Leu C.-M."/>
            <person name="Ehrhardt A."/>
            <person name="Cooper M.D."/>
        </authorList>
    </citation>
    <scope>INTERACTION WITH FCRL4</scope>
</reference>
<reference key="25">
    <citation type="journal article" date="2004" name="Cell. Mol. Life Sci.">
        <title>Signal transduction via the stem cell factor receptor/c-Kit.</title>
        <authorList>
            <person name="Ronnstrand L."/>
        </authorList>
    </citation>
    <scope>REVIEW ON ROLE IN KIT SIGNALING</scope>
</reference>
<reference key="26">
    <citation type="journal article" date="2004" name="J. Biol. Chem.">
        <title>Identification and characterization of a novel human myeloid inhibitory C-type lectin-like receptor (MICL) that is predominantly expressed on granulocytes and monocytes.</title>
        <authorList>
            <person name="Marshall A.S.J."/>
            <person name="Willment J.A."/>
            <person name="Lin H.-H."/>
            <person name="Williams D.L."/>
            <person name="Gordon S."/>
            <person name="Brown G.D."/>
        </authorList>
    </citation>
    <scope>FUNCTION</scope>
</reference>
<reference key="27">
    <citation type="journal article" date="2004" name="J. Biol. Chem.">
        <title>Activation of vascular endothelial growth factor receptor-3 and its downstream signaling promote cell survival under oxidative stress.</title>
        <authorList>
            <person name="Wang J.F."/>
            <person name="Zhang X."/>
            <person name="Groopman J.E."/>
        </authorList>
    </citation>
    <scope>INTERACTION WITH FLT4</scope>
</reference>
<reference key="28">
    <citation type="journal article" date="2005" name="Nat. Biotechnol.">
        <title>Immunoaffinity profiling of tyrosine phosphorylation in cancer cells.</title>
        <authorList>
            <person name="Rush J."/>
            <person name="Moritz A."/>
            <person name="Lee K.A."/>
            <person name="Guo A."/>
            <person name="Goss V.L."/>
            <person name="Spek E.J."/>
            <person name="Zhang H."/>
            <person name="Zha X.-M."/>
            <person name="Polakiewicz R.D."/>
            <person name="Comb M.J."/>
        </authorList>
    </citation>
    <scope>IDENTIFICATION BY MASS SPECTROMETRY [LARGE SCALE ANALYSIS]</scope>
</reference>
<reference key="29">
    <citation type="journal article" date="2006" name="Biochim. Biophys. Acta">
        <title>ANKHD1, ankyrin repeat and KH domain containing 1, is overexpressed in acute leukemias and is associated with SHP2 in K562 cells.</title>
        <authorList>
            <person name="Traina F."/>
            <person name="Favaro P.M.B."/>
            <person name="Medina Sde S."/>
            <person name="Duarte Ada S."/>
            <person name="Winnischofer S.M."/>
            <person name="Costa F.F."/>
            <person name="Saad S.T.O."/>
        </authorList>
    </citation>
    <scope>INTERACTION WITH ANKHD1</scope>
</reference>
<reference key="30">
    <citation type="journal article" date="2006" name="Cancer Res.">
        <title>ROS fusion tyrosine kinase activates a SH2 domain-containing phosphatase-2/phosphatidylinositol 3-kinase/mammalian target of rapamycin signaling axis to form glioblastoma in mice.</title>
        <authorList>
            <person name="Charest A."/>
            <person name="Wilker E.W."/>
            <person name="McLaughlin M.E."/>
            <person name="Lane K."/>
            <person name="Gowda R."/>
            <person name="Coven S."/>
            <person name="McMahon K."/>
            <person name="Kovach S."/>
            <person name="Feng Y."/>
            <person name="Yaffe M.B."/>
            <person name="Jacks T."/>
            <person name="Housman D."/>
        </authorList>
    </citation>
    <scope>INTERACTION WITH ROS1</scope>
</reference>
<reference key="31">
    <citation type="journal article" date="2007" name="Blood">
        <title>FcRL6, a new ITIM-bearing receptor on cytolytic cells, is broadly expressed by lymphocytes following HIV-1 infection.</title>
        <authorList>
            <person name="Wilson T.J."/>
            <person name="Presti R.M."/>
            <person name="Tassi I."/>
            <person name="Overton E.T."/>
            <person name="Cella M."/>
            <person name="Colonna M."/>
        </authorList>
    </citation>
    <scope>INTERACTION WITH FCRL6</scope>
</reference>
<reference key="32">
    <citation type="journal article" date="2007" name="J. Biol. Chem.">
        <title>Identification of CLEC12B, an inhibitory receptor on myeloid cells.</title>
        <authorList>
            <person name="Hoffmann S.C."/>
            <person name="Schellack C."/>
            <person name="Textor S."/>
            <person name="Konold S."/>
            <person name="Schmitz D."/>
            <person name="Cerwenka A."/>
            <person name="Pflanz S."/>
            <person name="Watzl C."/>
        </authorList>
    </citation>
    <scope>INTERACTION WITH CLEC12B</scope>
</reference>
<reference key="33">
    <citation type="journal article" date="2008" name="J. Biol. Chem.">
        <title>Nuclear protein tyrosine phosphatase Shp-2 is one important negative regulator of nuclear export of telomerase reverse transcriptase.</title>
        <authorList>
            <person name="Jakob S."/>
            <person name="Schroeder P."/>
            <person name="Lukosz M."/>
            <person name="Buchner N."/>
            <person name="Spyridopoulos I."/>
            <person name="Altschmied J."/>
            <person name="Haendeler J."/>
        </authorList>
    </citation>
    <scope>INTERACTION WITH TERT</scope>
    <scope>FUNCTION</scope>
</reference>
<reference key="34">
    <citation type="journal article" date="2008" name="J. Cell Biol.">
        <title>Regulation of RhoA-dependent ROCKII activation by Shp2.</title>
        <authorList>
            <person name="Lee H.H."/>
            <person name="Chang Z.F."/>
        </authorList>
    </citation>
    <scope>FUNCTION</scope>
</reference>
<reference key="35">
    <citation type="journal article" date="2008" name="Nat. Immunol.">
        <title>An essential function for beta-arrestin 2 in the inhibitory signaling of natural killer cells.</title>
        <authorList>
            <person name="Yu M.-C."/>
            <person name="Su L.-L."/>
            <person name="Zou L."/>
            <person name="Liu Y."/>
            <person name="Wu N."/>
            <person name="Kong L."/>
            <person name="Zhuang Z.-H."/>
            <person name="Sun L."/>
            <person name="Liu H.P."/>
            <person name="Hu J.-H."/>
            <person name="Li D."/>
            <person name="Strominger J.L."/>
            <person name="Zang J.-W."/>
            <person name="Pei G."/>
            <person name="Ge B.-X."/>
        </authorList>
    </citation>
    <scope>INTERACTION WITH KIR2DL1</scope>
</reference>
<reference key="36">
    <citation type="journal article" date="2009" name="Anal. Chem.">
        <title>Lys-N and trypsin cover complementary parts of the phosphoproteome in a refined SCX-based approach.</title>
        <authorList>
            <person name="Gauci S."/>
            <person name="Helbig A.O."/>
            <person name="Slijper M."/>
            <person name="Krijgsveld J."/>
            <person name="Heck A.J."/>
            <person name="Mohammed S."/>
        </authorList>
    </citation>
    <scope>ACETYLATION [LARGE SCALE ANALYSIS] AT THR-2</scope>
    <scope>CLEAVAGE OF INITIATOR METHIONINE [LARGE SCALE ANALYSIS]</scope>
    <scope>IDENTIFICATION BY MASS SPECTROMETRY [LARGE SCALE ANALYSIS]</scope>
</reference>
<reference key="37">
    <citation type="journal article" date="2009" name="Biochem. Biophys. Res. Commun.">
        <title>SHP-2 inhibits tyrosine phosphorylation of Cas-L and regulates cell migration.</title>
        <authorList>
            <person name="Yo K."/>
            <person name="Iwata S."/>
            <person name="Hashizume Y."/>
            <person name="Kondo S."/>
            <person name="Nomura S."/>
            <person name="Hosono O."/>
            <person name="Kawasaki H."/>
            <person name="Tanaka H."/>
            <person name="Dang N.H."/>
            <person name="Morimoto C."/>
        </authorList>
    </citation>
    <scope>FUNCTION</scope>
    <scope>INTERACTION WITH NEDD9</scope>
    <scope>MUTAGENESIS OF CYS-459</scope>
</reference>
<reference key="38">
    <citation type="journal article" date="2009" name="J. Biol. Chem.">
        <title>GAREM, a novel adaptor protein for growth factor receptor-bound protein 2, contributes to cellular transformation through the activation of extracellular signal-regulated kinase signaling.</title>
        <authorList>
            <person name="Tashiro K."/>
            <person name="Tsunematsu T."/>
            <person name="Okubo H."/>
            <person name="Ohta T."/>
            <person name="Sano E."/>
            <person name="Yamauchi E."/>
            <person name="Taniguchi H."/>
            <person name="Konishi H."/>
        </authorList>
    </citation>
    <scope>INTERACTION WITH GAREM1</scope>
</reference>
<reference key="39">
    <citation type="journal article" date="2009" name="J. Immunol.">
        <title>A novel and critical role for tyrosine 663 in platelet endothelial cell adhesion molecule-1 trafficking and transendothelial migration.</title>
        <authorList>
            <person name="Dasgupta B."/>
            <person name="Dufour E."/>
            <person name="Mamdouh Z."/>
            <person name="Muller W.A."/>
        </authorList>
    </citation>
    <scope>INTERACTION WITH PECAM1</scope>
</reference>
<reference key="40">
    <citation type="journal article" date="2009" name="J. Immunol.">
        <title>FCRL3, an autoimmune susceptibility gene, has inhibitory potential on B-cell receptor-mediated signaling.</title>
        <authorList>
            <person name="Kochi Y."/>
            <person name="Myouzen K."/>
            <person name="Yamada R."/>
            <person name="Suzuki A."/>
            <person name="Kurosaki T."/>
            <person name="Nakamura Y."/>
            <person name="Yamamoto K."/>
        </authorList>
    </citation>
    <scope>INTERACTION WITH FCRL3</scope>
</reference>
<reference key="41">
    <citation type="journal article" date="2009" name="Sci. Signal.">
        <title>Quantitative phosphoproteomic analysis of T cell receptor signaling reveals system-wide modulation of protein-protein interactions.</title>
        <authorList>
            <person name="Mayya V."/>
            <person name="Lundgren D.H."/>
            <person name="Hwang S.-I."/>
            <person name="Rezaul K."/>
            <person name="Wu L."/>
            <person name="Eng J.K."/>
            <person name="Rodionov V."/>
            <person name="Han D.K."/>
        </authorList>
    </citation>
    <scope>PHOSPHORYLATION [LARGE SCALE ANALYSIS] AT TYR-62 AND TYR-580</scope>
    <scope>IDENTIFICATION BY MASS SPECTROMETRY [LARGE SCALE ANALYSIS]</scope>
    <source>
        <tissue>Leukemic T-cell</tissue>
    </source>
</reference>
<reference key="42">
    <citation type="journal article" date="2010" name="Cell. Signal.">
        <title>Mutation of tyrosine residue 857 in the PDGF beta-receptor affects cell proliferation but not migration.</title>
        <authorList>
            <person name="Wardega P."/>
            <person name="Heldin C.H."/>
            <person name="Lennartsson J."/>
        </authorList>
    </citation>
    <scope>PHOSPHORYLATION</scope>
    <scope>INTERACTION WITH PDGFRB</scope>
</reference>
<reference key="43">
    <citation type="journal article" date="2010" name="PLoS Genet.">
        <title>Whole-genome sequencing of a single proband together with linkage analysis identifies a Mendelian disease gene.</title>
        <authorList>
            <person name="Sobreira N.L."/>
            <person name="Cirulli E.T."/>
            <person name="Avramopoulos D."/>
            <person name="Wohler E."/>
            <person name="Oswald G.L."/>
            <person name="Stevens E.L."/>
            <person name="Ge D."/>
            <person name="Shianna K.V."/>
            <person name="Smith J.P."/>
            <person name="Maia J.M."/>
            <person name="Gumbs C.E."/>
            <person name="Pevsner J."/>
            <person name="Thomas G."/>
            <person name="Valle D."/>
            <person name="Hoover-Fong J.E."/>
            <person name="Goldstein D.B."/>
        </authorList>
    </citation>
    <scope>INVOLVEMENT IN MC</scope>
</reference>
<reference key="44">
    <citation type="journal article" date="2010" name="Sci. Signal.">
        <title>Quantitative phosphoproteomics reveals widespread full phosphorylation site occupancy during mitosis.</title>
        <authorList>
            <person name="Olsen J.V."/>
            <person name="Vermeulen M."/>
            <person name="Santamaria A."/>
            <person name="Kumar C."/>
            <person name="Miller M.L."/>
            <person name="Jensen L.J."/>
            <person name="Gnad F."/>
            <person name="Cox J."/>
            <person name="Jensen T.S."/>
            <person name="Nigg E.A."/>
            <person name="Brunak S."/>
            <person name="Mann M."/>
        </authorList>
    </citation>
    <scope>IDENTIFICATION BY MASS SPECTROMETRY [LARGE SCALE ANALYSIS]</scope>
    <source>
        <tissue>Cervix carcinoma</tissue>
    </source>
</reference>
<reference key="45">
    <citation type="journal article" date="2011" name="BMC Syst. Biol.">
        <title>Initial characterization of the human central proteome.</title>
        <authorList>
            <person name="Burkard T.R."/>
            <person name="Planyavsky M."/>
            <person name="Kaupe I."/>
            <person name="Breitwieser F.P."/>
            <person name="Buerckstuemmer T."/>
            <person name="Bennett K.L."/>
            <person name="Superti-Furga G."/>
            <person name="Colinge J."/>
        </authorList>
    </citation>
    <scope>IDENTIFICATION BY MASS SPECTROMETRY [LARGE SCALE ANALYSIS]</scope>
</reference>
<reference key="46">
    <citation type="journal article" date="2012" name="Sci. Signal.">
        <title>Mice lacking the ITIM-containing receptor G6b-B exhibit macrothrombocytopenia and aberrant platelet function.</title>
        <authorList>
            <person name="Mazharian A."/>
            <person name="Wang Y.J."/>
            <person name="Mori J."/>
            <person name="Bem D."/>
            <person name="Finney B."/>
            <person name="Heising S."/>
            <person name="Gissen P."/>
            <person name="White J.G."/>
            <person name="Berndt M.C."/>
            <person name="Gardiner E.E."/>
            <person name="Nieswandt B."/>
            <person name="Douglas M.R."/>
            <person name="Campbell R.D."/>
            <person name="Watson S.P."/>
            <person name="Senis Y.A."/>
        </authorList>
    </citation>
    <scope>INTERACTION WITH MPIG6B</scope>
</reference>
<reference key="47">
    <citation type="journal article" date="2013" name="J. Proteome Res.">
        <title>Toward a comprehensive characterization of a human cancer cell phosphoproteome.</title>
        <authorList>
            <person name="Zhou H."/>
            <person name="Di Palma S."/>
            <person name="Preisinger C."/>
            <person name="Peng M."/>
            <person name="Polat A.N."/>
            <person name="Heck A.J."/>
            <person name="Mohammed S."/>
        </authorList>
    </citation>
    <scope>PHOSPHORYLATION [LARGE SCALE ANALYSIS] AT TYR-580</scope>
    <scope>IDENTIFICATION BY MASS SPECTROMETRY [LARGE SCALE ANALYSIS]</scope>
    <source>
        <tissue>Cervix carcinoma</tissue>
        <tissue>Erythroleukemia</tissue>
    </source>
</reference>
<reference key="48">
    <citation type="journal article" date="2014" name="J. Proteomics">
        <title>An enzyme assisted RP-RPLC approach for in-depth analysis of human liver phosphoproteome.</title>
        <authorList>
            <person name="Bian Y."/>
            <person name="Song C."/>
            <person name="Cheng K."/>
            <person name="Dong M."/>
            <person name="Wang F."/>
            <person name="Huang J."/>
            <person name="Sun D."/>
            <person name="Wang L."/>
            <person name="Ye M."/>
            <person name="Zou H."/>
        </authorList>
    </citation>
    <scope>IDENTIFICATION BY MASS SPECTROMETRY [LARGE SCALE ANALYSIS]</scope>
    <source>
        <tissue>Liver</tissue>
    </source>
</reference>
<reference key="49">
    <citation type="journal article" date="2022" name="J. Invest. Dermatol.">
        <title>CLEC12B Decreases Melanoma Proliferation by Repressing Signal Transducer and Activator of Transcription 3.</title>
        <authorList>
            <person name="Montaudie H."/>
            <person name="Sormani L."/>
            <person name="Dadone-Montaudie B."/>
            <person name="Heim M."/>
            <person name="Cardot-Leccia N."/>
            <person name="Tulic M.K."/>
            <person name="Beranger G."/>
            <person name="Gay A.S."/>
            <person name="Debayle D."/>
            <person name="Cheli Y."/>
            <person name="Raymond J.H."/>
            <person name="Sohier P."/>
            <person name="Petit V."/>
            <person name="Rocchi S."/>
            <person name="Gesbert F."/>
            <person name="Larue L."/>
            <person name="Passeron T."/>
        </authorList>
    </citation>
    <scope>INTERACTION WITH CLEC12B</scope>
    <scope>PHOSPHORYLATION AT TYR-542</scope>
</reference>
<reference key="50">
    <citation type="journal article" date="1998" name="Cell">
        <title>Crystal structure of the tyrosine phosphatase SHP-2.</title>
        <authorList>
            <person name="Hof P."/>
            <person name="Pluskey S."/>
            <person name="Dhe-Paganon S."/>
            <person name="Eck M.J."/>
            <person name="Shoelson S.E."/>
        </authorList>
    </citation>
    <scope>X-RAY CRYSTALLOGRAPHY (2.0 ANGSTROMS) OF 3-526 (ISOFORM 2)</scope>
</reference>
<reference key="51">
    <citation type="journal article" date="2009" name="Cell">
        <title>Large-scale structural analysis of the classical human protein tyrosine phosphatome.</title>
        <authorList>
            <person name="Barr A.J."/>
            <person name="Ugochukwu E."/>
            <person name="Lee W.H."/>
            <person name="King O.N.F."/>
            <person name="Filippakopoulos P."/>
            <person name="Alfano I."/>
            <person name="Savitsky P."/>
            <person name="Burgess-Brown N.A."/>
            <person name="Mueller S."/>
            <person name="Knapp S."/>
        </authorList>
    </citation>
    <scope>X-RAY CRYSTALLOGRAPHY (1.6 ANGSTROMS) OF 237-529</scope>
</reference>
<reference key="52">
    <citation type="journal article" date="2010" name="J. Med. Chem.">
        <title>Salicylic acid based small molecule inhibitor for the oncogenic Src homology-2 domain containing protein tyrosine phosphatase-2 (SHP2).</title>
        <authorList>
            <person name="Zhang X."/>
            <person name="He Y."/>
            <person name="Liu S."/>
            <person name="Yu Z."/>
            <person name="Jiang Z.X."/>
            <person name="Yang Z."/>
            <person name="Dong Y."/>
            <person name="Nabinger S.C."/>
            <person name="Wu L."/>
            <person name="Gunawan A.M."/>
            <person name="Wang L."/>
            <person name="Chan R.J."/>
            <person name="Zhang Z.Y."/>
        </authorList>
    </citation>
    <scope>X-RAY CRYSTALLOGRAPHY (2.0 ANGSTROMS) OF 262-528 IN COMPLEX WITH INHIBITOR</scope>
    <scope>CATALYTIC ACTIVITY</scope>
</reference>
<reference key="53">
    <citation type="journal article" date="2001" name="Nat. Genet.">
        <title>Mutations in PTPN11, encoding the protein tyrosine phosphatase SHP-2, cause Noonan syndrome.</title>
        <authorList>
            <person name="Tartaglia M."/>
            <person name="Mehler E.L."/>
            <person name="Goldberg R."/>
            <person name="Zampino G."/>
            <person name="Brunner H.G."/>
            <person name="Kremer H."/>
            <person name="van der Burgt I."/>
            <person name="Crosby A.H."/>
            <person name="Ion A."/>
            <person name="Jeffery S."/>
            <person name="Kalidas K."/>
            <person name="Patton M.A."/>
            <person name="Kucherlapati R.S."/>
            <person name="Gelb B.D."/>
        </authorList>
    </citation>
    <scope>VARIANTS NS1 GLY-61; CYS-63; GLY-72; SER-72; ASP-76; ARG-79; VAL-282; ASP-308 AND VAL-504</scope>
</reference>
<reference key="54">
    <citation type="journal article" date="2001" name="Nat. Genet.">
        <authorList>
            <person name="Tartaglia M."/>
            <person name="Mehler E.L."/>
            <person name="Goldberg R."/>
            <person name="Zampino G."/>
            <person name="Brunner H.G."/>
            <person name="Kremer H."/>
            <person name="van der Burgt I."/>
            <person name="Crosby A.H."/>
            <person name="Ion A."/>
            <person name="Jeffery S."/>
            <person name="Kalidas K."/>
            <person name="Patton M.A."/>
            <person name="Kucherlapati R.S."/>
            <person name="Gelb B.D."/>
        </authorList>
    </citation>
    <scope>ERRATUM OF PUBMED:11704759</scope>
</reference>
<reference key="55">
    <citation type="journal article" date="2001" name="Nat. Genet.">
        <authorList>
            <person name="Tartaglia M."/>
            <person name="Mehler E.L."/>
            <person name="Goldberg R."/>
            <person name="Zampino G."/>
            <person name="Brunner H.G."/>
            <person name="Kremer H."/>
            <person name="van der Burgt I."/>
            <person name="Crosby A.H."/>
            <person name="Ion A."/>
            <person name="Jeffery S."/>
            <person name="Kalidas K."/>
            <person name="Patton M.A."/>
            <person name="Kucherlapati R.S."/>
            <person name="Gelb B.D."/>
        </authorList>
    </citation>
    <scope>ERRATUM OF PUBMED:11704759</scope>
</reference>
<reference key="56">
    <citation type="journal article" date="2002" name="Am. J. Hum. Genet.">
        <title>PTPN11 mutations in Noonan syndrome: molecular spectrum, genotype-phenotype correlation, and phenotypic heterogeneity.</title>
        <authorList>
            <person name="Tartaglia M."/>
            <person name="Kalidas K."/>
            <person name="Shaw A."/>
            <person name="Song X."/>
            <person name="Musat D.L."/>
            <person name="van der Burgt I."/>
            <person name="Brunner H.G."/>
            <person name="Bertola D.R."/>
            <person name="Crosby A.H."/>
            <person name="Ion A."/>
            <person name="Kucherlapati R.S."/>
            <person name="Jeffery S."/>
            <person name="Patton M.A."/>
            <person name="Gelb B.D."/>
        </authorList>
    </citation>
    <scope>VARIANTS NS1 ALA-42; ALA-60; ASN-61; GLY-61; ASP-62; CYS-63; GLY-72; ILE-73; ASP-76; ARG-79; ALA-106; ASP-139; CYS-279; VAL-282; LEU-285; SER-285; ASP-308; SER-308; VAL-309; LYS-501 AND VAL-504</scope>
</reference>
<reference key="57">
    <citation type="journal article" date="2002" name="Am. J. Hum. Genet.">
        <title>Grouping of multiple-lentigines/LEOPARD and Noonan syndromes on the PTPN11 gene.</title>
        <authorList>
            <person name="Digilio M.C."/>
            <person name="Conti E."/>
            <person name="Sarkozy A."/>
            <person name="Mingarelli R."/>
            <person name="Dottorini T."/>
            <person name="Marino B."/>
            <person name="Pizzuti A."/>
            <person name="Dallapiccola B."/>
        </authorList>
    </citation>
    <scope>VARIANTS LPRD1 CYS-279 AND MET-468</scope>
</reference>
<reference key="58">
    <citation type="journal article" date="2002" name="Hum. Mutat.">
        <title>PTPN11 mutations in Noonan syndrome type I: detection of recurrent mutations in exons 3 and 13.</title>
        <authorList>
            <person name="Maheshwari M."/>
            <person name="Belmont J."/>
            <person name="Fernbach S."/>
            <person name="Ho T."/>
            <person name="Molinari L."/>
            <person name="Yakub I."/>
            <person name="Yu F."/>
            <person name="Combes A."/>
            <person name="Towbin J.A."/>
            <person name="Craigen W.J."/>
            <person name="Gibbs R.A."/>
        </authorList>
    </citation>
    <scope>VARIANTS NS1 ASP-62; CYS-63 AND THR-502</scope>
</reference>
<reference key="59">
    <citation type="journal article" date="2002" name="J. Clin. Endocrinol. Metab.">
        <title>PTPN11 (protein-tyrosine phosphatase, nonreceptor-type 11) mutations in seven Japanese patients with Noonan syndrome.</title>
        <authorList>
            <person name="Kosaki K."/>
            <person name="Suzuki T."/>
            <person name="Muroya K."/>
            <person name="Hasegawa T."/>
            <person name="Sato S."/>
            <person name="Matsuo N."/>
            <person name="Kosaki R."/>
            <person name="Nagai T."/>
            <person name="Hasegawa Y."/>
            <person name="Ogata T."/>
        </authorList>
    </citation>
    <scope>VARIANTS NS1 GLY-61; CYS-63; SER-72; ILE-73; SER-285 AND ASP-308</scope>
</reference>
<reference key="60">
    <citation type="journal article" date="2003" name="Eur. J. Hum. Genet.">
        <title>PTPN11 mutation in a large family with Noonan syndrome and dizygous twinning.</title>
        <authorList>
            <person name="Schollen E."/>
            <person name="Matthijs G."/>
            <person name="Gewillig M."/>
            <person name="Fryns J.-P."/>
            <person name="Legius E."/>
        </authorList>
    </citation>
    <scope>VARIANT NS1 ARG-79</scope>
</reference>
<reference key="61">
    <citation type="journal article" date="2003" name="Eur. J. Hum. Genet.">
        <title>Spectrum of mutations in PTPN11 and genotype-phenotype correlation in 96 patients with Noonan syndrome and five patients with cardio-facio-cutaneous syndrome.</title>
        <authorList>
            <person name="Musante L."/>
            <person name="Kehl H.G."/>
            <person name="Majewski F."/>
            <person name="Meinecke P."/>
            <person name="Schweiger S."/>
            <person name="Gillessen-Kaesbach G."/>
            <person name="Wieczorek D."/>
            <person name="Hinkel G.K."/>
            <person name="Tinschert S."/>
            <person name="Hoeltzenbein M."/>
            <person name="Ropers H.-H."/>
            <person name="Kalscheuer V.M."/>
        </authorList>
    </citation>
    <scope>VARIANTS NS1 LYS-58; ASN-61; GLY-61; CYS-63; GLN-69; LEU-71; SER-72; ILE-73; ASP-76; ARG-79; ASP-139; ARG-256; VAL-282 AND ASP-308</scope>
</reference>
<reference key="62">
    <citation type="journal article" date="2003" name="Eur. J. Hum. Genet.">
        <authorList>
            <person name="Musante L."/>
            <person name="Kehl H.G."/>
            <person name="Majewski F."/>
            <person name="Meinecke P."/>
            <person name="Schweiger S."/>
            <person name="Gillessen-Kaesbach G."/>
            <person name="Wieczorek D."/>
            <person name="Hinkel G.K."/>
            <person name="Tinschert S."/>
            <person name="Hoeltzenbein M."/>
            <person name="Ropers H.-H."/>
            <person name="Kalscheuer V.M."/>
        </authorList>
    </citation>
    <scope>ERRATUM OF PUBMED:12634870</scope>
</reference>
<reference key="63">
    <citation type="journal article" date="2003" name="Eur. J. Pediatr.">
        <title>Noonan syndrome with leukaemoid reaction and overproduction of catecholamines: a case report.</title>
        <authorList>
            <person name="Kondoh T."/>
            <person name="Ishii E."/>
            <person name="Aoki Y."/>
            <person name="Shimizu T."/>
            <person name="Zaitsu M."/>
            <person name="Matsubara Y."/>
            <person name="Moriuchi H."/>
        </authorList>
    </citation>
    <scope>VARIANT NS1 THR-502</scope>
</reference>
<reference key="64">
    <citation type="journal article" date="2003" name="Hum. Mutat.">
        <title>A novel PTPN11 mutation in LEOPARD syndrome.</title>
        <authorList>
            <person name="Conti E."/>
            <person name="Dottorini T."/>
            <person name="Sarkozy A."/>
            <person name="Tiller G.E."/>
            <person name="Esposito G."/>
            <person name="Pizzuti A."/>
            <person name="Dallapiccola B."/>
        </authorList>
    </citation>
    <scope>VARIANT LPRD1 PRO-506</scope>
</reference>
<reference key="65">
    <citation type="journal article" date="2003" name="J. Med. Genet.">
        <title>Correlation between PTPN11 gene mutations and congenital heart defects in Noonan and LEOPARD syndromes.</title>
        <authorList>
            <person name="Sarkozy A."/>
            <person name="Conti E."/>
            <person name="Seripa D."/>
            <person name="Digilio M.C."/>
            <person name="Grifone N."/>
            <person name="Tandoi C."/>
            <person name="Fazio V.M."/>
            <person name="Di Ciommo V."/>
            <person name="Marino B."/>
            <person name="Pizzuti A."/>
            <person name="Dallapiccola B."/>
        </authorList>
    </citation>
    <scope>VARIANTS NS1 ILE-2; ALA-42; ASP-62; CYS-63; GLY-72; PRO-79; ALA-106; CYS-279; ASP-308; SER-308; MET-468; ARG-503; VAL-504 AND PHE-560</scope>
</reference>
<reference key="66">
    <citation type="journal article" date="2003" name="Nat. Genet.">
        <title>Somatic mutations in PTPN11 in juvenile myelomonocytic leukemia, myelodysplastic syndromes and acute myeloid leukemia.</title>
        <authorList>
            <person name="Tartaglia M."/>
            <person name="Niemeyer C.M."/>
            <person name="Fragale A."/>
            <person name="Song X."/>
            <person name="Buechner J."/>
            <person name="Jung A."/>
            <person name="Haehlen K."/>
            <person name="Hasle H."/>
            <person name="Licht J.D."/>
            <person name="Gelb B.D."/>
        </authorList>
    </citation>
    <scope>VARIANTS JMML TYR-61; VAL-61; LYS-69; THR-72; VAL-72; ALA-76; GLY-76; LYS-76; VAL-76; ALA-503 AND ARG-503</scope>
    <scope>VARIANTS MYELODYSPLASTIC SYNDROME VAL-60; VAL-61; LYS-69; LEU-71 AND ALA-76</scope>
    <scope>VARIANTS NS1 ASP-62 AND ILE-73</scope>
    <scope>VARIANT ACUTE MYELOID LEUKEMIA LYS-71</scope>
</reference>
<reference key="67">
    <citation type="journal article" date="2004" name="Am. J. Med. Genet. A">
        <title>Clinical variability in a Noonan syndrome family with a new PTPN11 gene mutation.</title>
        <authorList>
            <person name="Bertola D.R."/>
            <person name="Pereira A.C."/>
            <person name="de Oliveira P.S.L."/>
            <person name="Kim C.A."/>
            <person name="Krieger J.E."/>
        </authorList>
    </citation>
    <scope>VARIANT NS1 MET-411</scope>
</reference>
<reference key="68">
    <citation type="journal article" date="2004" name="Am. J. Med. Genet. A">
        <title>Two novel and one recurrent PTPN11 mutations in LEOPARD syndrome.</title>
        <authorList>
            <person name="Yoshida R."/>
            <person name="Nagai T."/>
            <person name="Hasegawa T."/>
            <person name="Kinoshita E."/>
            <person name="Tanaka T."/>
            <person name="Ogata T."/>
        </authorList>
    </citation>
    <scope>VARIANTS LPRD1 THR-461 AND ALA-464</scope>
</reference>
<reference key="69">
    <citation type="journal article" date="2004" name="J. Med. Genet.">
        <title>PTPN11 mutations in patients with LEOPARD syndrome: a French multicentric experience.</title>
        <authorList>
            <consortium name="French collaborative Noonan study group"/>
            <person name="Keren B."/>
            <person name="Hadchouel A."/>
            <person name="Saba S."/>
            <person name="Sznajer Y."/>
            <person name="Bonneau D."/>
            <person name="Leheup B."/>
            <person name="Boute O."/>
            <person name="Gaillard D."/>
            <person name="Lacombe D."/>
            <person name="Layet V."/>
            <person name="Marlin S."/>
            <person name="Mortier G."/>
            <person name="Toutain A."/>
            <person name="Beylot C."/>
            <person name="Baumann C."/>
            <person name="Verloes A."/>
            <person name="Cave H."/>
        </authorList>
    </citation>
    <scope>VARIANTS LPRD1 CYS-279; SER-279; MET-468 AND PRO-510</scope>
</reference>
<reference key="70">
    <citation type="journal article" date="2004" name="J. Med. Genet.">
        <title>Clinical and molecular analysis of 30 patients with multiple lentigines LEOPARD syndrome.</title>
        <authorList>
            <person name="Sarkozy A."/>
            <person name="Conti E."/>
            <person name="Digilio M.C."/>
            <person name="Marino B."/>
            <person name="Morini E."/>
            <person name="Pacileo G."/>
            <person name="Wilson M."/>
            <person name="Calabro R."/>
            <person name="Pizzuti A."/>
            <person name="Dallapiccola B."/>
        </authorList>
    </citation>
    <scope>VARIANTS LPRD1 CYS-279; SER-279; ALA-464; MET-468; TRP-498; LEU-498 AND PRO-506</scope>
</reference>
<reference key="71">
    <citation type="journal article" date="2005" name="Am. J. Med. Genet. A">
        <title>Neurofibromatosis-Noonan syndrome: molecular evidence of the concurrence of both disorders in a patient.</title>
        <authorList>
            <person name="Bertola D.R."/>
            <person name="Pereira A.C."/>
            <person name="Passetti F."/>
            <person name="de Oliveira P.S.L."/>
            <person name="Messiaen L."/>
            <person name="Gelb B.D."/>
            <person name="Kim C.A."/>
            <person name="Krieger J.E."/>
        </authorList>
    </citation>
    <scope>VARIANT NS1 ARG-506</scope>
</reference>
<reference key="72">
    <citation type="journal article" date="2005" name="Eur. J. Pediatr.">
        <title>A novel mutation in the PTPN11 gene in a patient with Noonan syndrome and rapidly progressive hypertrophic cardiomyopathy.</title>
        <authorList>
            <person name="Takahashi K."/>
            <person name="Kogaki S."/>
            <person name="Kurotobi S."/>
            <person name="Nasuno S."/>
            <person name="Ohta M."/>
            <person name="Okabe H."/>
            <person name="Wada K."/>
            <person name="Sakai N."/>
            <person name="Taniike M."/>
            <person name="Ozono K."/>
        </authorList>
    </citation>
    <scope>VARIANT NS1 GLU-510</scope>
</reference>
<reference key="73">
    <citation type="journal article" date="2005" name="J. Hum. Genet.">
        <title>Genetic heterogeneity in LEOPARD syndrome: two families with no mutations in PTPN11.</title>
        <authorList>
            <person name="Kalidas K."/>
            <person name="Shaw A.C."/>
            <person name="Crosby A.H."/>
            <person name="Newbury-Ecob R."/>
            <person name="Greenhalgh L."/>
            <person name="Temple I.K."/>
            <person name="Law C."/>
            <person name="Patel A."/>
            <person name="Patton M.A."/>
            <person name="Jeffery S."/>
        </authorList>
    </citation>
    <scope>VARIANT LPRD1 PRO-506</scope>
</reference>
<reference key="74">
    <citation type="journal article" date="2006" name="Eur. J. Pediatr.">
        <title>PTPN11 gene mutations: linking the Gln510Glu mutation to the 'LEOPARD syndrome phenotype'.</title>
        <authorList>
            <person name="Digilio M.C."/>
            <person name="Sarkozy A."/>
            <person name="Pacileo G."/>
            <person name="Limongelli G."/>
            <person name="Marino B."/>
            <person name="Dallapiccola B."/>
        </authorList>
    </citation>
    <scope>VARIANT LPRD1 GLU-510</scope>
</reference>
<reference key="75">
    <citation type="journal article" date="2006" name="J. Pediatr. Hematol. Oncol.">
        <title>Acute myelomonocytic leukemia in a boy with LEOPARD syndrome (PTPN11 gene mutation positive).</title>
        <authorList>
            <person name="Ucar C."/>
            <person name="Calyskan U."/>
            <person name="Martini S."/>
            <person name="Heinritz W."/>
        </authorList>
    </citation>
    <scope>VARIANT LPRD1 CYS-279</scope>
</reference>
<reference key="76">
    <citation type="journal article" date="2008" name="J. Hum. Genet.">
        <title>PTPN11, SOS1, KRAS, and RAF1 gene analysis, and genotype-phenotype correlation in Korean patients with Noonan syndrome.</title>
        <authorList>
            <person name="Ko J.M."/>
            <person name="Kim J.M."/>
            <person name="Kim G.H."/>
            <person name="Yoo H.W."/>
        </authorList>
    </citation>
    <scope>VARIANT NS1 ALA-59</scope>
</reference>
<reference key="77">
    <citation type="journal article" date="2014" name="Am. J. Med. Genet. A">
        <title>A PTPN11 allele encoding a catalytically impaired SHP2 protein in a patient with a Noonan syndrome phenotype.</title>
        <authorList>
            <person name="Edwards J.J."/>
            <person name="Martinelli S."/>
            <person name="Pannone L."/>
            <person name="Lo I.F."/>
            <person name="Shi L."/>
            <person name="Edelmann L."/>
            <person name="Tartaglia M."/>
            <person name="Luk H.M."/>
            <person name="Gelb B.D."/>
        </authorList>
    </citation>
    <scope>VARIANT NS1 SER-491</scope>
    <scope>VARIANT LPRD1 TRP-498</scope>
    <scope>CHARACTERIZATION OF VARIANTS NS1 SER-491</scope>
    <scope>CHARACTERIZATION OF VARIANT LPRD1 TRP-498</scope>
</reference>
<reference key="78">
    <citation type="journal article" date="2016" name="Biochem. Biophys. Res. Commun.">
        <title>Determination of the catalytic activity of LEOPARD syndrome-associated SHP2 mutants toward parafibromin, a bona fide SHP2 substrate involved in Wnt signaling.</title>
        <authorList>
            <person name="Noda S."/>
            <person name="Takahashi A."/>
            <person name="Hayashi T."/>
            <person name="Tanuma S."/>
            <person name="Hatakeyama M."/>
        </authorList>
    </citation>
    <scope>VARIANT JMML LYS-76</scope>
    <scope>CHARACTERIZATION OF VARIANT JMML LYS-76</scope>
    <scope>VARIANTS LPRD1 CYS-279; MET-468; PRO-506 AND GLU-510</scope>
    <scope>CHARACTERIZATION OF VARIANTS LPRD1 CYS-279; MET-468; PRO-506 AND GLU-510</scope>
    <scope>FUNCTION</scope>
    <scope>CATALYTIC ACTIVITY</scope>
    <scope>INTERACTION WITH CDC73</scope>
    <scope>SUBCELLULAR LOCATION</scope>
</reference>
<reference key="79">
    <citation type="journal article" date="2017" name="Hum. Mutat.">
        <title>Structural, Functional, and Clinical Characterization of a Novel PTPN11 Mutation Cluster Underlying Noonan Syndrome.</title>
        <authorList>
            <person name="Pannone L."/>
            <person name="Bocchinfuso G."/>
            <person name="Flex E."/>
            <person name="Rossi C."/>
            <person name="Baldassarre G."/>
            <person name="Lissewski C."/>
            <person name="Pantaleoni F."/>
            <person name="Consoli F."/>
            <person name="Lepri F."/>
            <person name="Magliozzi M."/>
            <person name="Anselmi M."/>
            <person name="Delle Vigne S."/>
            <person name="Sorge G."/>
            <person name="Karaer K."/>
            <person name="Cuturilo G."/>
            <person name="Sartorio A."/>
            <person name="Tinschert S."/>
            <person name="Accadia M."/>
            <person name="Digilio M.C."/>
            <person name="Zampino G."/>
            <person name="De Luca A."/>
            <person name="Cav e H."/>
            <person name="Zenker M."/>
            <person name="Gelb B.D."/>
            <person name="Dallapiccola B."/>
            <person name="Stella L."/>
            <person name="Ferrero G.B."/>
            <person name="Martinelli S."/>
            <person name="Tartaglia M."/>
        </authorList>
    </citation>
    <scope>VARIANTS NS1 HIS-261; PHE-261; ARG-262; PHE-262 AND GLN-265</scope>
    <scope>CHARACTERIZATION OF VARIANTS NS1 HIS-261; PHE-261; ARG-262; PHE-262 AND GLN-265</scope>
    <scope>FUNCTION</scope>
    <scope>CATALYTIC ACTIVITY</scope>
</reference>
<organism>
    <name type="scientific">Homo sapiens</name>
    <name type="common">Human</name>
    <dbReference type="NCBI Taxonomy" id="9606"/>
    <lineage>
        <taxon>Eukaryota</taxon>
        <taxon>Metazoa</taxon>
        <taxon>Chordata</taxon>
        <taxon>Craniata</taxon>
        <taxon>Vertebrata</taxon>
        <taxon>Euteleostomi</taxon>
        <taxon>Mammalia</taxon>
        <taxon>Eutheria</taxon>
        <taxon>Euarchontoglires</taxon>
        <taxon>Primates</taxon>
        <taxon>Haplorrhini</taxon>
        <taxon>Catarrhini</taxon>
        <taxon>Hominidae</taxon>
        <taxon>Homo</taxon>
    </lineage>
</organism>
<protein>
    <recommendedName>
        <fullName>Tyrosine-protein phosphatase non-receptor type 11</fullName>
        <ecNumber evidence="58 59">3.1.3.48</ecNumber>
    </recommendedName>
    <alternativeName>
        <fullName>Protein-tyrosine phosphatase 1D</fullName>
        <shortName>PTP-1D</shortName>
    </alternativeName>
    <alternativeName>
        <fullName>Protein-tyrosine phosphatase 2C</fullName>
        <shortName>PTP-2C</shortName>
    </alternativeName>
    <alternativeName>
        <fullName>SH-PTP2</fullName>
        <shortName>SHP-2</shortName>
        <shortName>Shp2</shortName>
    </alternativeName>
    <alternativeName>
        <fullName>SH-PTP3</fullName>
    </alternativeName>
</protein>
<accession>Q06124</accession>
<accession>A8K1D9</accession>
<accession>Q96HD7</accession>
<gene>
    <name type="primary">PTPN11</name>
    <name type="synonym">PTP2C</name>
    <name type="synonym">SHPTP2</name>
</gene>
<comment type="function">
    <text evidence="2 10 29 45 47 49 58 59">Acts downstream of various receptor and cytoplasmic protein tyrosine kinases to participate in the signal transduction from the cell surface to the nucleus (PubMed:10655584, PubMed:14739280, PubMed:18559669, PubMed:18829466, PubMed:26742426, PubMed:28074573). Positively regulates MAPK signal transduction pathway (PubMed:28074573). Dephosphorylates GAB1, ARHGAP35 and EGFR (PubMed:28074573). Dephosphorylates ROCK2 at 'Tyr-722' resulting in stimulation of its RhoA binding activity (PubMed:18559669). Dephosphorylates CDC73 (PubMed:26742426). Dephosphorylates SOX9 on tyrosine residues, leading to inactivate SOX9 and promote ossification (By similarity). Dephosphorylates tyrosine-phosphorylated NEDD9/CAS-L (PubMed:19275884).</text>
</comment>
<comment type="catalytic activity">
    <reaction evidence="6 53 58 59">
        <text>O-phospho-L-tyrosyl-[protein] + H2O = L-tyrosyl-[protein] + phosphate</text>
        <dbReference type="Rhea" id="RHEA:10684"/>
        <dbReference type="Rhea" id="RHEA-COMP:10136"/>
        <dbReference type="Rhea" id="RHEA-COMP:20101"/>
        <dbReference type="ChEBI" id="CHEBI:15377"/>
        <dbReference type="ChEBI" id="CHEBI:43474"/>
        <dbReference type="ChEBI" id="CHEBI:46858"/>
        <dbReference type="ChEBI" id="CHEBI:61978"/>
        <dbReference type="EC" id="3.1.3.48"/>
    </reaction>
</comment>
<comment type="subunit">
    <text evidence="2 3 8 9 10 11 12 13 14 15 27 28 31 41 42 43 44 46 47 49 50 51 52 53 54 56 58 60 63 66 67 68">Interacts with phosphorylated LIME1 and BCAR3. Interacts with SHB and INPP5D/SHIP1 (By similarity). Interacts with MILR1 (tyrosine-phosphorylated). Interacts with FLT1 (tyrosine-phosphorylated), FLT3 (tyrosine-phosphorylated), FLT4 (tyrosine-phosphorylated), KIT and GRB2. Interacts with PDGFRA (tyrosine phosphorylated). Interacts (via SH2 domain) with TEK/TIE2 (tyrosine phosphorylated) (By similarity). Interacts with PTPNS1 and CD84. Interacts with phosphorylated SIT1 and MPZL1. Interacts with FCRL4, FCRL6 and ANKHD1. Interacts with KIR2DL1; the interaction is enhanced by ARRB2. Interacts with GAB2. Interacts with TERT; the interaction retains TERT in the nucleus. Interacts with PECAM1 and FER. Interacts with EPHA2 (activated); participates in PTK2/FAK1 dephosphorylation in EPHA2 downstream signaling. Interacts with ROS1; mediates PTPN11 phosphorylation. Interacts with PDGFRB (tyrosine phosphorylated); this interaction increases the PTPN11 phosphatase activity. Interacts with GAREM1 isoform 1 (tyrosine phosphorylated); the interaction increases MAPK/ERK activity and does not affect the GRB2/SOS complex formation. Interacts with CDC73 (PubMed:26742426). Interacts with CEACAM1 (via cytoplasmic domain); this interaction depends on the monomer/dimer equilibrium and is phosphorylation-dependent (By similarity). Interacts with MPIG6B (via ITIM motif) (PubMed:23112346). Interacts with SIGLEC10 (By similarity). Interacts with FCRL3 (via phosphorylated ITIM motifs) (PubMed:11162587, PubMed:19843936). Interacts with CLEC12B (via ITIM motif); this interaction triggers dephosphorylation and activation of PTPN11. Interacts (via SH2 domains) with NEDD9/CAS-L; the interaction is enhanced when NEDD9/CAS-L is tyrosine phosphorylated (PubMed:19275884).</text>
</comment>
<comment type="interaction">
    <interactant intactId="EBI-297779">
        <id>Q06124</id>
    </interactant>
    <interactant intactId="EBI-608057">
        <id>P10275</id>
        <label>AR</label>
    </interactant>
    <organismsDiffer>false</organismsDiffer>
    <experiments>12</experiments>
</comment>
<comment type="interaction">
    <interactant intactId="EBI-297779">
        <id>Q06124</id>
    </interactant>
    <interactant intactId="EBI-1753137">
        <id>P32239</id>
        <label>CCKBR</label>
    </interactant>
    <organismsDiffer>false</organismsDiffer>
    <experiments>5</experiments>
</comment>
<comment type="interaction">
    <interactant intactId="EBI-297779">
        <id>Q06124</id>
    </interactant>
    <interactant intactId="EBI-1580565">
        <id>Q9BZW8</id>
        <label>CD244</label>
    </interactant>
    <organismsDiffer>false</organismsDiffer>
    <experiments>5</experiments>
</comment>
<comment type="interaction">
    <interactant intactId="EBI-297779">
        <id>Q06124</id>
    </interactant>
    <interactant intactId="EBI-3906571">
        <id>P20138</id>
        <label>CD33</label>
    </interactant>
    <organismsDiffer>false</organismsDiffer>
    <experiments>5</experiments>
</comment>
<comment type="interaction">
    <interactant intactId="EBI-297779">
        <id>Q06124</id>
    </interactant>
    <interactant intactId="EBI-711879">
        <id>Q08345</id>
        <label>DDR1</label>
    </interactant>
    <organismsDiffer>false</organismsDiffer>
    <experiments>4</experiments>
</comment>
<comment type="interaction">
    <interactant intactId="EBI-297779">
        <id>Q06124</id>
    </interactant>
    <interactant intactId="EBI-297353">
        <id>P00533</id>
        <label>EGFR</label>
    </interactant>
    <organismsDiffer>false</organismsDiffer>
    <experiments>5</experiments>
</comment>
<comment type="interaction">
    <interactant intactId="EBI-297779">
        <id>Q06124</id>
    </interactant>
    <interactant intactId="EBI-702104">
        <id>P29317</id>
        <label>EPHA2</label>
    </interactant>
    <organismsDiffer>false</organismsDiffer>
    <experiments>3</experiments>
</comment>
<comment type="interaction">
    <interactant intactId="EBI-297779">
        <id>Q06124</id>
    </interactant>
    <interactant intactId="EBI-641062">
        <id>P04626</id>
        <label>ERBB2</label>
    </interactant>
    <organismsDiffer>false</organismsDiffer>
    <experiments>3</experiments>
</comment>
<comment type="interaction">
    <interactant intactId="EBI-297779">
        <id>Q06124</id>
    </interactant>
    <interactant intactId="EBI-1104330">
        <id>Q8WU20</id>
        <label>FRS2</label>
    </interactant>
    <organismsDiffer>false</organismsDiffer>
    <experiments>4</experiments>
</comment>
<comment type="interaction">
    <interactant intactId="EBI-297779">
        <id>Q06124</id>
    </interactant>
    <interactant intactId="EBI-517684">
        <id>Q13480</id>
        <label>GAB1</label>
    </interactant>
    <organismsDiffer>false</organismsDiffer>
    <experiments>42</experiments>
</comment>
<comment type="interaction">
    <interactant intactId="EBI-297779">
        <id>Q06124</id>
    </interactant>
    <interactant intactId="EBI-975200">
        <id>Q9UQC2</id>
        <label>GAB2</label>
    </interactant>
    <organismsDiffer>false</organismsDiffer>
    <experiments>4</experiments>
</comment>
<comment type="interaction">
    <interactant intactId="EBI-297779">
        <id>Q06124</id>
    </interactant>
    <interactant intactId="EBI-401755">
        <id>P62993</id>
        <label>GRB2</label>
    </interactant>
    <organismsDiffer>false</organismsDiffer>
    <experiments>11</experiments>
</comment>
<comment type="interaction">
    <interactant intactId="EBI-297779">
        <id>Q06124</id>
    </interactant>
    <interactant intactId="EBI-475981">
        <id>P08069</id>
        <label>IGF1R</label>
    </interactant>
    <organismsDiffer>false</organismsDiffer>
    <experiments>5</experiments>
</comment>
<comment type="interaction">
    <interactant intactId="EBI-297779">
        <id>Q06124</id>
    </interactant>
    <interactant intactId="EBI-475899">
        <id>P06213</id>
        <label>INSR</label>
    </interactant>
    <organismsDiffer>false</organismsDiffer>
    <experiments>3</experiments>
</comment>
<comment type="interaction">
    <interactant intactId="EBI-297779">
        <id>Q06124</id>
    </interactant>
    <interactant intactId="EBI-517592">
        <id>P35568</id>
        <label>IRS1</label>
    </interactant>
    <organismsDiffer>false</organismsDiffer>
    <experiments>3</experiments>
</comment>
<comment type="interaction">
    <interactant intactId="EBI-297779">
        <id>Q06124</id>
    </interactant>
    <interactant intactId="EBI-8632435">
        <id>P43628</id>
        <label>KIR2DL3</label>
    </interactant>
    <organismsDiffer>false</organismsDiffer>
    <experiments>4</experiments>
</comment>
<comment type="interaction">
    <interactant intactId="EBI-297779">
        <id>Q06124</id>
    </interactant>
    <interactant intactId="EBI-1379503">
        <id>P10721</id>
        <label>KIT</label>
    </interactant>
    <organismsDiffer>false</organismsDiffer>
    <experiments>29</experiments>
</comment>
<comment type="interaction">
    <interactant intactId="EBI-297779">
        <id>Q06124</id>
    </interactant>
    <interactant intactId="EBI-1039152">
        <id>P08581</id>
        <label>MET</label>
    </interactant>
    <organismsDiffer>false</organismsDiffer>
    <experiments>13</experiments>
</comment>
<comment type="interaction">
    <interactant intactId="EBI-297779">
        <id>Q06124</id>
    </interactant>
    <interactant intactId="EBI-963338">
        <id>O95297</id>
        <label>MPZL1</label>
    </interactant>
    <organismsDiffer>false</organismsDiffer>
    <experiments>5</experiments>
</comment>
<comment type="interaction">
    <interactant intactId="EBI-297779">
        <id>Q06124</id>
    </interactant>
    <interactant intactId="EBI-4314328">
        <id>Q15116</id>
        <label>PDCD1</label>
    </interactant>
    <organismsDiffer>false</organismsDiffer>
    <experiments>3</experiments>
</comment>
<comment type="interaction">
    <interactant intactId="EBI-297779">
        <id>Q06124</id>
    </interactant>
    <interactant intactId="EBI-641237">
        <id>P09619</id>
        <label>PDGFRB</label>
    </interactant>
    <organismsDiffer>false</organismsDiffer>
    <experiments>8</experiments>
</comment>
<comment type="interaction">
    <interactant intactId="EBI-297779">
        <id>Q06124</id>
    </interactant>
    <interactant intactId="EBI-716404">
        <id>P16284</id>
        <label>PECAM1</label>
    </interactant>
    <organismsDiffer>false</organismsDiffer>
    <experiments>7</experiments>
</comment>
<comment type="interaction">
    <interactant intactId="EBI-297779">
        <id>Q06124</id>
    </interactant>
    <interactant intactId="EBI-702142">
        <id>Q05397</id>
        <label>PTK2</label>
    </interactant>
    <organismsDiffer>false</organismsDiffer>
    <experiments>6</experiments>
</comment>
<comment type="interaction">
    <interactant intactId="EBI-297779">
        <id>Q06124</id>
    </interactant>
    <interactant intactId="EBI-702209">
        <id>P49023</id>
        <label>PXN</label>
    </interactant>
    <organismsDiffer>false</organismsDiffer>
    <experiments>3</experiments>
</comment>
<comment type="interaction">
    <interactant intactId="EBI-297779">
        <id>Q06124</id>
    </interactant>
    <interactant intactId="EBI-744831">
        <id>P49247</id>
        <label>RPIA</label>
    </interactant>
    <organismsDiffer>false</organismsDiffer>
    <experiments>4</experiments>
</comment>
<comment type="interaction">
    <interactant intactId="EBI-297779">
        <id>Q06124</id>
    </interactant>
    <interactant intactId="EBI-742790">
        <id>Q13049</id>
        <label>TRIM32</label>
    </interactant>
    <organismsDiffer>false</organismsDiffer>
    <experiments>5</experiments>
</comment>
<comment type="interaction">
    <interactant intactId="EBI-297779">
        <id>Q06124</id>
    </interactant>
    <interactant intactId="EBI-7645934">
        <id>P68105</id>
        <label>EEF1A1</label>
    </interactant>
    <organismsDiffer>true</organismsDiffer>
    <experiments>2</experiments>
</comment>
<comment type="interaction">
    <interactant intactId="EBI-297779">
        <id>Q06124</id>
    </interactant>
    <interactant intactId="EBI-7645815">
        <id>Q71V39</id>
        <label>EEF1A2</label>
    </interactant>
    <organismsDiffer>true</organismsDiffer>
    <experiments>2</experiments>
</comment>
<comment type="interaction">
    <interactant intactId="EBI-297779">
        <id>Q06124</id>
    </interactant>
    <interactant intactId="EBI-520230">
        <id>P35570</id>
        <label>Irs1</label>
    </interactant>
    <organismsDiffer>true</organismsDiffer>
    <experiments>3</experiments>
</comment>
<comment type="interaction">
    <interactant intactId="EBI-297779">
        <id>Q06124</id>
    </interactant>
    <interactant intactId="EBI-7945080">
        <id>P97710</id>
        <label>Sirpa</label>
    </interactant>
    <organismsDiffer>true</organismsDiffer>
    <experiments>3</experiments>
</comment>
<comment type="interaction">
    <interactant intactId="EBI-17635971">
        <id>Q06124-2</id>
    </interactant>
    <interactant intactId="EBI-930143">
        <id>Q6P1J9</id>
        <label>CDC73</label>
    </interactant>
    <organismsDiffer>false</organismsDiffer>
    <experiments>2</experiments>
</comment>
<comment type="interaction">
    <interactant intactId="EBI-17635971">
        <id>Q06124-2</id>
    </interactant>
    <interactant intactId="EBI-517684">
        <id>Q13480</id>
        <label>GAB1</label>
    </interactant>
    <organismsDiffer>false</organismsDiffer>
    <experiments>2</experiments>
</comment>
<comment type="interaction">
    <interactant intactId="EBI-17635971">
        <id>Q06124-2</id>
    </interactant>
    <interactant intactId="EBI-371669">
        <id>O75496</id>
        <label>GMNN</label>
    </interactant>
    <organismsDiffer>false</organismsDiffer>
    <experiments>3</experiments>
</comment>
<comment type="interaction">
    <interactant intactId="EBI-17635971">
        <id>Q06124-2</id>
    </interactant>
    <interactant intactId="EBI-740492">
        <id>Q9UKI8</id>
        <label>TLK1</label>
    </interactant>
    <organismsDiffer>false</organismsDiffer>
    <experiments>3</experiments>
</comment>
<comment type="subcellular location">
    <subcellularLocation>
        <location evidence="58">Cytoplasm</location>
    </subcellularLocation>
    <subcellularLocation>
        <location evidence="58">Nucleus</location>
    </subcellularLocation>
</comment>
<comment type="alternative products">
    <event type="alternative splicing"/>
    <isoform>
        <id>Q06124-2</id>
        <name>1</name>
        <name>PTP2C</name>
        <sequence type="displayed"/>
    </isoform>
    <isoform>
        <id>Q06124-1</id>
        <name>2</name>
        <name>PTP2Ci</name>
        <sequence type="described" ref="VSP_060437"/>
    </isoform>
    <isoform>
        <id>Q06124-3</id>
        <name>3</name>
        <sequence type="described" ref="VSP_060438 VSP_060439"/>
    </isoform>
</comment>
<comment type="tissue specificity">
    <text evidence="25 62 65">Widely expressed, with highest levels in heart, brain, and skeletal muscle.</text>
</comment>
<comment type="domain">
    <text>The SH2 domains repress phosphatase activity. Binding of these domains to phosphotyrosine-containing proteins relieves this auto-inhibition, possibly by inducing a conformational change in the enzyme.</text>
</comment>
<comment type="PTM">
    <text evidence="1 54 60 61 63 64">Phosphorylated on Tyr-542 and Tyr-580 upon receptor protein tyrosine kinase activation; which creates a binding site for GRB2 and other SH2-containing proteins. Phosphorylated upon activation of the receptor-type kinase FLT3. Phosphorylated upon activation of the receptor-type kinase PDGFRA (By similarity). Phosphorylated by activated PDGFRB.</text>
</comment>
<comment type="disease" evidence="18 30 32 34 35 36 39 40 57 58">
    <disease id="DI-01888">
        <name>LEOPARD syndrome 1</name>
        <acronym>LPRD1</acronym>
        <description>A disorder characterized by lentigines, electrocardiographic conduction abnormalities, ocular hypertelorism, pulmonic stenosis, abnormalities of genitalia, retardation of growth, and sensorineural deafness.</description>
        <dbReference type="MIM" id="151100"/>
    </disease>
    <text>The disease is caused by variants affecting the gene represented in this entry.</text>
</comment>
<comment type="disease" evidence="16 17 19 20 21 22 23 24 26 33 37 38 48 57 59">
    <disease id="DI-02072">
        <name>Noonan syndrome 1</name>
        <acronym>NS1</acronym>
        <description>A form of Noonan syndrome, a disease characterized by short stature, facial dysmorphic features such as hypertelorism, a downward eyeslant and low-set posteriorly rotated ears, and a high incidence of congenital heart defects and hypertrophic cardiomyopathy. Other features can include a short neck with webbing or redundancy of skin, deafness, motor delay, variable intellectual deficits, multiple skeletal defects, cryptorchidism, and bleeding diathesis. Individuals with Noonan syndrome are at risk of juvenile myelomonocytic leukemia, a myeloproliferative disorder characterized by excessive production of myelomonocytic cells. Some patients with NS1 develop multiple giant cell lesions of the jaw or other bony or soft tissues, which are classified as pigmented villonodular synovitis (PVNS) when occurring in the jaw or joints.</description>
        <dbReference type="MIM" id="163950"/>
    </disease>
    <text>The disease is caused by variants affecting the gene represented in this entry. Mutations in PTPN11 account for more than 50% of the cases.</text>
</comment>
<comment type="disease" evidence="23 58">
    <disease id="DI-01851">
        <name>Leukemia, juvenile myelomonocytic</name>
        <acronym>JMML</acronym>
        <description>An aggressive pediatric myelodysplastic syndrome/myeloproliferative disorder characterized by malignant transformation in the hematopoietic stem cell compartment with proliferation of differentiated progeny. Patients have splenomegaly, enlarged lymph nodes, rashes, and hemorrhages.</description>
        <dbReference type="MIM" id="607785"/>
    </disease>
    <text>The disease is caused by variants affecting the gene represented in this entry.</text>
</comment>
<comment type="disease" evidence="55">
    <disease id="DI-02832">
        <name>Metachondromatosis</name>
        <acronym>MC</acronym>
        <description>A skeletal disorder with radiologic features of both multiple exostoses and Ollier disease, characterized by the presence of exostoses, commonly of the bones of the hands and feet, and enchondromas of the metaphyses of long bones and iliac crest.</description>
        <dbReference type="MIM" id="156250"/>
    </disease>
    <text>The disease is caused by variants affecting the gene represented in this entry.</text>
</comment>
<comment type="similarity">
    <text evidence="69">Belongs to the protein-tyrosine phosphatase family. Non-receptor class 2 subfamily.</text>
</comment>
<comment type="online information" name="Atlas of Genetics and Cytogenetics in Oncology and Haematology">
    <link uri="https://atlasgeneticsoncology.org/gene/41910/PTPN11"/>
</comment>
<sequence>MTSRRWFHPNITGVEAENLLLTRGVDGSFLARPSKSNPGDFTLSVRRNGAVTHIKIQNTGDYYDLYGGEKFATLAELVQYYMEHHGQLKEKNGDVIELKYPLNCADPTSERWFHGHLSGKEAEKLLTEKGKHGSFLVRESQSHPGDFVLSVRTGDDKGESNDGKSKVTHVMIRCQELKYDVGGGERFDSLTDLVEHYKKNPMVETLGTVLQLKQPLNTTRINAAEIESRVRELSKLAETTDKVKQGFWEEFETLQQQECKLLYSRKEGQRQENKNKNRYKNILPFDHTRVVLHDGDPNEPVSDYINANIIMPEFETKCNNSKPKKSYIATQGCLQNTVNDFWRMVFQENSRVIVMTTKEVERGKSKCVKYWPDEYALKEYGVMRVRNVKESAAHDYTLRELKLSKVGQGNTERTVWQYHFRTWPDHGVPSDPGGVLDFLEEVHHKQESIMDAGPVVVHCSAGIGRTGTFIVIDILIDIIREKGVDCDIDVPKTIQMVRSQRSGMVQTEAQYRFIYMAVQHYIETLQRRIEEEQKSKRKGHEYTNIKYSLADQTSGDQSPLPPCTPTPPCAEMREDSARVYENVGLMQQQKSFR</sequence>
<proteinExistence type="evidence at protein level"/>